<gene>
    <name type="primary">SH3GLB1</name>
    <name type="synonym">KIAA0491</name>
    <name type="ORF">CGI-61</name>
</gene>
<reference key="1">
    <citation type="journal article" date="2001" name="Genomics">
        <title>SH3GLB, a new endophilin-related protein family featuring an SH3 domain.</title>
        <authorList>
            <person name="Pierrat B."/>
            <person name="Simonen M."/>
            <person name="Cueto M."/>
            <person name="Mestan J."/>
            <person name="Ferrigno P."/>
            <person name="Heim J."/>
        </authorList>
    </citation>
    <scope>NUCLEOTIDE SEQUENCE [MRNA] (ISOFORM 1)</scope>
    <scope>MUTAGENESIS OF VAL-8</scope>
    <scope>INTERACTION WITH BAX AND SH3GLB2</scope>
    <scope>TISSUE SPECIFICITY</scope>
    <source>
        <tissue>Skeletal muscle</tissue>
    </source>
</reference>
<reference key="2">
    <citation type="journal article" date="2001" name="J. Biol. Chem.">
        <title>Molecular cloning and characterization of Bif-1. A novel Src homology 3 domain-containing protein that associates with Bax.</title>
        <authorList>
            <person name="Cuddeback S.M."/>
            <person name="Yamaguchi H."/>
            <person name="Komatsu K."/>
            <person name="Miyashita T."/>
            <person name="Yamada M."/>
            <person name="Wu C."/>
            <person name="Singh S."/>
            <person name="Wang H.-G."/>
        </authorList>
    </citation>
    <scope>NUCLEOTIDE SEQUENCE [MRNA] (ISOFORM 1)</scope>
    <scope>INTERACTION WITH BAX</scope>
    <scope>TISSUE SPECIFICITY</scope>
    <source>
        <tissue>Fetal brain</tissue>
    </source>
</reference>
<reference key="3">
    <citation type="journal article" date="2003" name="J. Biol. Chem.">
        <title>Characterization of endophilin B1b, a brain-specific membrane-associated lysophosphatidic acid acyl transferase with properties distinct from endophilin A1.</title>
        <authorList>
            <person name="Modregger J."/>
            <person name="Schmidt A.A."/>
            <person name="Ritter B."/>
            <person name="Huttner W.B."/>
            <person name="Plomann M."/>
        </authorList>
    </citation>
    <scope>NUCLEOTIDE SEQUENCE [MRNA] (ISOFORM 2)</scope>
    <source>
        <tissue>Lung</tissue>
    </source>
</reference>
<reference key="4">
    <citation type="journal article" date="1997" name="DNA Res.">
        <title>Characterization of cDNA clones in size-fractionated cDNA libraries from human brain.</title>
        <authorList>
            <person name="Seki N."/>
            <person name="Ohira M."/>
            <person name="Nagase T."/>
            <person name="Ishikawa K."/>
            <person name="Miyajima N."/>
            <person name="Nakajima D."/>
            <person name="Nomura N."/>
            <person name="Ohara O."/>
        </authorList>
    </citation>
    <scope>NUCLEOTIDE SEQUENCE [LARGE SCALE MRNA] (ISOFORM 1)</scope>
    <source>
        <tissue>Brain</tissue>
    </source>
</reference>
<reference key="5">
    <citation type="journal article" date="2000" name="Genome Res.">
        <title>Identification of novel human genes evolutionarily conserved in Caenorhabditis elegans by comparative proteomics.</title>
        <authorList>
            <person name="Lai C.-H."/>
            <person name="Chou C.-Y."/>
            <person name="Ch'ang L.-Y."/>
            <person name="Liu C.-S."/>
            <person name="Lin W.-C."/>
        </authorList>
    </citation>
    <scope>NUCLEOTIDE SEQUENCE [LARGE SCALE MRNA] (ISOFORM 1)</scope>
</reference>
<reference key="6">
    <citation type="journal article" date="2004" name="Nat. Genet.">
        <title>Complete sequencing and characterization of 21,243 full-length human cDNAs.</title>
        <authorList>
            <person name="Ota T."/>
            <person name="Suzuki Y."/>
            <person name="Nishikawa T."/>
            <person name="Otsuki T."/>
            <person name="Sugiyama T."/>
            <person name="Irie R."/>
            <person name="Wakamatsu A."/>
            <person name="Hayashi K."/>
            <person name="Sato H."/>
            <person name="Nagai K."/>
            <person name="Kimura K."/>
            <person name="Makita H."/>
            <person name="Sekine M."/>
            <person name="Obayashi M."/>
            <person name="Nishi T."/>
            <person name="Shibahara T."/>
            <person name="Tanaka T."/>
            <person name="Ishii S."/>
            <person name="Yamamoto J."/>
            <person name="Saito K."/>
            <person name="Kawai Y."/>
            <person name="Isono Y."/>
            <person name="Nakamura Y."/>
            <person name="Nagahari K."/>
            <person name="Murakami K."/>
            <person name="Yasuda T."/>
            <person name="Iwayanagi T."/>
            <person name="Wagatsuma M."/>
            <person name="Shiratori A."/>
            <person name="Sudo H."/>
            <person name="Hosoiri T."/>
            <person name="Kaku Y."/>
            <person name="Kodaira H."/>
            <person name="Kondo H."/>
            <person name="Sugawara M."/>
            <person name="Takahashi M."/>
            <person name="Kanda K."/>
            <person name="Yokoi T."/>
            <person name="Furuya T."/>
            <person name="Kikkawa E."/>
            <person name="Omura Y."/>
            <person name="Abe K."/>
            <person name="Kamihara K."/>
            <person name="Katsuta N."/>
            <person name="Sato K."/>
            <person name="Tanikawa M."/>
            <person name="Yamazaki M."/>
            <person name="Ninomiya K."/>
            <person name="Ishibashi T."/>
            <person name="Yamashita H."/>
            <person name="Murakawa K."/>
            <person name="Fujimori K."/>
            <person name="Tanai H."/>
            <person name="Kimata M."/>
            <person name="Watanabe M."/>
            <person name="Hiraoka S."/>
            <person name="Chiba Y."/>
            <person name="Ishida S."/>
            <person name="Ono Y."/>
            <person name="Takiguchi S."/>
            <person name="Watanabe S."/>
            <person name="Yosida M."/>
            <person name="Hotuta T."/>
            <person name="Kusano J."/>
            <person name="Kanehori K."/>
            <person name="Takahashi-Fujii A."/>
            <person name="Hara H."/>
            <person name="Tanase T.-O."/>
            <person name="Nomura Y."/>
            <person name="Togiya S."/>
            <person name="Komai F."/>
            <person name="Hara R."/>
            <person name="Takeuchi K."/>
            <person name="Arita M."/>
            <person name="Imose N."/>
            <person name="Musashino K."/>
            <person name="Yuuki H."/>
            <person name="Oshima A."/>
            <person name="Sasaki N."/>
            <person name="Aotsuka S."/>
            <person name="Yoshikawa Y."/>
            <person name="Matsunawa H."/>
            <person name="Ichihara T."/>
            <person name="Shiohata N."/>
            <person name="Sano S."/>
            <person name="Moriya S."/>
            <person name="Momiyama H."/>
            <person name="Satoh N."/>
            <person name="Takami S."/>
            <person name="Terashima Y."/>
            <person name="Suzuki O."/>
            <person name="Nakagawa S."/>
            <person name="Senoh A."/>
            <person name="Mizoguchi H."/>
            <person name="Goto Y."/>
            <person name="Shimizu F."/>
            <person name="Wakebe H."/>
            <person name="Hishigaki H."/>
            <person name="Watanabe T."/>
            <person name="Sugiyama A."/>
            <person name="Takemoto M."/>
            <person name="Kawakami B."/>
            <person name="Yamazaki M."/>
            <person name="Watanabe K."/>
            <person name="Kumagai A."/>
            <person name="Itakura S."/>
            <person name="Fukuzumi Y."/>
            <person name="Fujimori Y."/>
            <person name="Komiyama M."/>
            <person name="Tashiro H."/>
            <person name="Tanigami A."/>
            <person name="Fujiwara T."/>
            <person name="Ono T."/>
            <person name="Yamada K."/>
            <person name="Fujii Y."/>
            <person name="Ozaki K."/>
            <person name="Hirao M."/>
            <person name="Ohmori Y."/>
            <person name="Kawabata A."/>
            <person name="Hikiji T."/>
            <person name="Kobatake N."/>
            <person name="Inagaki H."/>
            <person name="Ikema Y."/>
            <person name="Okamoto S."/>
            <person name="Okitani R."/>
            <person name="Kawakami T."/>
            <person name="Noguchi S."/>
            <person name="Itoh T."/>
            <person name="Shigeta K."/>
            <person name="Senba T."/>
            <person name="Matsumura K."/>
            <person name="Nakajima Y."/>
            <person name="Mizuno T."/>
            <person name="Morinaga M."/>
            <person name="Sasaki M."/>
            <person name="Togashi T."/>
            <person name="Oyama M."/>
            <person name="Hata H."/>
            <person name="Watanabe M."/>
            <person name="Komatsu T."/>
            <person name="Mizushima-Sugano J."/>
            <person name="Satoh T."/>
            <person name="Shirai Y."/>
            <person name="Takahashi Y."/>
            <person name="Nakagawa K."/>
            <person name="Okumura K."/>
            <person name="Nagase T."/>
            <person name="Nomura N."/>
            <person name="Kikuchi H."/>
            <person name="Masuho Y."/>
            <person name="Yamashita R."/>
            <person name="Nakai K."/>
            <person name="Yada T."/>
            <person name="Nakamura Y."/>
            <person name="Ohara O."/>
            <person name="Isogai T."/>
            <person name="Sugano S."/>
        </authorList>
    </citation>
    <scope>NUCLEOTIDE SEQUENCE [LARGE SCALE MRNA] (ISOFORMS 1 AND 3)</scope>
    <source>
        <tissue>Kidney</tissue>
        <tissue>Placenta</tissue>
    </source>
</reference>
<reference key="7">
    <citation type="journal article" date="2006" name="Nature">
        <title>The DNA sequence and biological annotation of human chromosome 1.</title>
        <authorList>
            <person name="Gregory S.G."/>
            <person name="Barlow K.F."/>
            <person name="McLay K.E."/>
            <person name="Kaul R."/>
            <person name="Swarbreck D."/>
            <person name="Dunham A."/>
            <person name="Scott C.E."/>
            <person name="Howe K.L."/>
            <person name="Woodfine K."/>
            <person name="Spencer C.C.A."/>
            <person name="Jones M.C."/>
            <person name="Gillson C."/>
            <person name="Searle S."/>
            <person name="Zhou Y."/>
            <person name="Kokocinski F."/>
            <person name="McDonald L."/>
            <person name="Evans R."/>
            <person name="Phillips K."/>
            <person name="Atkinson A."/>
            <person name="Cooper R."/>
            <person name="Jones C."/>
            <person name="Hall R.E."/>
            <person name="Andrews T.D."/>
            <person name="Lloyd C."/>
            <person name="Ainscough R."/>
            <person name="Almeida J.P."/>
            <person name="Ambrose K.D."/>
            <person name="Anderson F."/>
            <person name="Andrew R.W."/>
            <person name="Ashwell R.I.S."/>
            <person name="Aubin K."/>
            <person name="Babbage A.K."/>
            <person name="Bagguley C.L."/>
            <person name="Bailey J."/>
            <person name="Beasley H."/>
            <person name="Bethel G."/>
            <person name="Bird C.P."/>
            <person name="Bray-Allen S."/>
            <person name="Brown J.Y."/>
            <person name="Brown A.J."/>
            <person name="Buckley D."/>
            <person name="Burton J."/>
            <person name="Bye J."/>
            <person name="Carder C."/>
            <person name="Chapman J.C."/>
            <person name="Clark S.Y."/>
            <person name="Clarke G."/>
            <person name="Clee C."/>
            <person name="Cobley V."/>
            <person name="Collier R.E."/>
            <person name="Corby N."/>
            <person name="Coville G.J."/>
            <person name="Davies J."/>
            <person name="Deadman R."/>
            <person name="Dunn M."/>
            <person name="Earthrowl M."/>
            <person name="Ellington A.G."/>
            <person name="Errington H."/>
            <person name="Frankish A."/>
            <person name="Frankland J."/>
            <person name="French L."/>
            <person name="Garner P."/>
            <person name="Garnett J."/>
            <person name="Gay L."/>
            <person name="Ghori M.R.J."/>
            <person name="Gibson R."/>
            <person name="Gilby L.M."/>
            <person name="Gillett W."/>
            <person name="Glithero R.J."/>
            <person name="Grafham D.V."/>
            <person name="Griffiths C."/>
            <person name="Griffiths-Jones S."/>
            <person name="Grocock R."/>
            <person name="Hammond S."/>
            <person name="Harrison E.S.I."/>
            <person name="Hart E."/>
            <person name="Haugen E."/>
            <person name="Heath P.D."/>
            <person name="Holmes S."/>
            <person name="Holt K."/>
            <person name="Howden P.J."/>
            <person name="Hunt A.R."/>
            <person name="Hunt S.E."/>
            <person name="Hunter G."/>
            <person name="Isherwood J."/>
            <person name="James R."/>
            <person name="Johnson C."/>
            <person name="Johnson D."/>
            <person name="Joy A."/>
            <person name="Kay M."/>
            <person name="Kershaw J.K."/>
            <person name="Kibukawa M."/>
            <person name="Kimberley A.M."/>
            <person name="King A."/>
            <person name="Knights A.J."/>
            <person name="Lad H."/>
            <person name="Laird G."/>
            <person name="Lawlor S."/>
            <person name="Leongamornlert D.A."/>
            <person name="Lloyd D.M."/>
            <person name="Loveland J."/>
            <person name="Lovell J."/>
            <person name="Lush M.J."/>
            <person name="Lyne R."/>
            <person name="Martin S."/>
            <person name="Mashreghi-Mohammadi M."/>
            <person name="Matthews L."/>
            <person name="Matthews N.S.W."/>
            <person name="McLaren S."/>
            <person name="Milne S."/>
            <person name="Mistry S."/>
            <person name="Moore M.J.F."/>
            <person name="Nickerson T."/>
            <person name="O'Dell C.N."/>
            <person name="Oliver K."/>
            <person name="Palmeiri A."/>
            <person name="Palmer S.A."/>
            <person name="Parker A."/>
            <person name="Patel D."/>
            <person name="Pearce A.V."/>
            <person name="Peck A.I."/>
            <person name="Pelan S."/>
            <person name="Phelps K."/>
            <person name="Phillimore B.J."/>
            <person name="Plumb R."/>
            <person name="Rajan J."/>
            <person name="Raymond C."/>
            <person name="Rouse G."/>
            <person name="Saenphimmachak C."/>
            <person name="Sehra H.K."/>
            <person name="Sheridan E."/>
            <person name="Shownkeen R."/>
            <person name="Sims S."/>
            <person name="Skuce C.D."/>
            <person name="Smith M."/>
            <person name="Steward C."/>
            <person name="Subramanian S."/>
            <person name="Sycamore N."/>
            <person name="Tracey A."/>
            <person name="Tromans A."/>
            <person name="Van Helmond Z."/>
            <person name="Wall M."/>
            <person name="Wallis J.M."/>
            <person name="White S."/>
            <person name="Whitehead S.L."/>
            <person name="Wilkinson J.E."/>
            <person name="Willey D.L."/>
            <person name="Williams H."/>
            <person name="Wilming L."/>
            <person name="Wray P.W."/>
            <person name="Wu Z."/>
            <person name="Coulson A."/>
            <person name="Vaudin M."/>
            <person name="Sulston J.E."/>
            <person name="Durbin R.M."/>
            <person name="Hubbard T."/>
            <person name="Wooster R."/>
            <person name="Dunham I."/>
            <person name="Carter N.P."/>
            <person name="McVean G."/>
            <person name="Ross M.T."/>
            <person name="Harrow J."/>
            <person name="Olson M.V."/>
            <person name="Beck S."/>
            <person name="Rogers J."/>
            <person name="Bentley D.R."/>
        </authorList>
    </citation>
    <scope>NUCLEOTIDE SEQUENCE [LARGE SCALE GENOMIC DNA]</scope>
</reference>
<reference key="8">
    <citation type="journal article" date="2004" name="Genome Res.">
        <title>The status, quality, and expansion of the NIH full-length cDNA project: the Mammalian Gene Collection (MGC).</title>
        <authorList>
            <consortium name="The MGC Project Team"/>
        </authorList>
    </citation>
    <scope>NUCLEOTIDE SEQUENCE [LARGE SCALE MRNA] (ISOFORM 1)</scope>
    <source>
        <tissue>Skin</tissue>
    </source>
</reference>
<reference key="9">
    <citation type="journal article" date="2001" name="J. Cell Biol.">
        <title>Generation of high curvature membranes mediated by direct endophilin bilayer interactions.</title>
        <authorList>
            <person name="Farsad K."/>
            <person name="Ringstad N."/>
            <person name="Takei K."/>
            <person name="Floyd S.R."/>
            <person name="Rose K."/>
            <person name="De Camilli P."/>
        </authorList>
    </citation>
    <scope>FUNCTION</scope>
    <scope>DOMAIN</scope>
</reference>
<reference key="10">
    <citation type="journal article" date="2004" name="J. Cell Biol.">
        <title>Endophilin B1 is required for the maintenance of mitochondrial morphology.</title>
        <authorList>
            <person name="Karbowski M."/>
            <person name="Jeong S.-Y."/>
            <person name="Youle R.J."/>
        </authorList>
    </citation>
    <scope>FUNCTION</scope>
    <scope>SUBCELLULAR LOCATION</scope>
</reference>
<reference key="11">
    <citation type="journal article" date="2005" name="Mol. Cell. Biol.">
        <title>Loss of Bif-1 suppresses Bax/Bak conformational change and mitochondrial apoptosis.</title>
        <authorList>
            <person name="Takahashi Y."/>
            <person name="Karbowski M."/>
            <person name="Yamaguchi H."/>
            <person name="Kazi A."/>
            <person name="Wu J."/>
            <person name="Sebti S.M."/>
            <person name="Youle R.J."/>
            <person name="Wang H.G."/>
        </authorList>
    </citation>
    <scope>FUNCTION</scope>
</reference>
<reference key="12">
    <citation type="journal article" date="2007" name="Nat. Cell Biol.">
        <title>Bif-1 interacts with Beclin 1 through UVRAG and regulates autophagy and tumorigenesis.</title>
        <authorList>
            <person name="Takahashi Y."/>
            <person name="Coppola D."/>
            <person name="Matsushita N."/>
            <person name="Cualing H.D."/>
            <person name="Sun M."/>
            <person name="Sato Y."/>
            <person name="Liang C."/>
            <person name="Jung J.U."/>
            <person name="Cheng J.Q."/>
            <person name="Mule J.J."/>
            <person name="Pledger W.J."/>
            <person name="Wang H.G."/>
        </authorList>
    </citation>
    <scope>FUNCTION</scope>
    <scope>INTERACTION WITH UVRAG AND BECN1</scope>
    <scope>SUBCELLULAR LOCATION</scope>
    <scope>DOMAIN</scope>
</reference>
<reference key="13">
    <citation type="journal article" date="2010" name="Exp. Cell Res.">
        <title>A phosphatidylinositol 3-kinase class III sub-complex containing VPS15, VPS34, Beclin 1, UVRAG and BIF-1 regulates cytokinesis and degradative endocytic traffic.</title>
        <authorList>
            <person name="Thoresen S.B."/>
            <person name="Pedersen N.M."/>
            <person name="Liestol K."/>
            <person name="Stenmark H."/>
        </authorList>
    </citation>
    <scope>FUNCTION</scope>
    <scope>SUBUNIT</scope>
    <scope>SUBCELLULAR LOCATION</scope>
</reference>
<reference key="14">
    <citation type="journal article" date="2011" name="Autophagy">
        <title>Bif-1 regulates Atg9 trafficking by mediating the fission of Golgi membranes during autophagy.</title>
        <authorList>
            <person name="Takahashi Y."/>
            <person name="Meyerkord C.L."/>
            <person name="Hori T."/>
            <person name="Runkle K."/>
            <person name="Fox T.E."/>
            <person name="Kester M."/>
            <person name="Loughran T.P."/>
            <person name="Wang H.G."/>
        </authorList>
    </citation>
    <scope>FUNCTION</scope>
    <scope>SUBCELLULAR LOCATION</scope>
</reference>
<reference key="15">
    <citation type="journal article" date="2011" name="BMC Syst. Biol.">
        <title>Initial characterization of the human central proteome.</title>
        <authorList>
            <person name="Burkard T.R."/>
            <person name="Planyavsky M."/>
            <person name="Kaupe I."/>
            <person name="Breitwieser F.P."/>
            <person name="Buerckstuemmer T."/>
            <person name="Bennett K.L."/>
            <person name="Superti-Furga G."/>
            <person name="Colinge J."/>
        </authorList>
    </citation>
    <scope>IDENTIFICATION BY MASS SPECTROMETRY [LARGE SCALE ANALYSIS]</scope>
</reference>
<reference key="16">
    <citation type="journal article" date="2011" name="Nat. Cell Biol.">
        <title>Cdk5-mediated phosphorylation of endophilin B1 is required for induced autophagy in models of Parkinson's disease.</title>
        <authorList>
            <person name="Wong A.S."/>
            <person name="Lee R.H."/>
            <person name="Cheung A.Y."/>
            <person name="Yeung P.K."/>
            <person name="Chung S.K."/>
            <person name="Cheung Z.H."/>
            <person name="Ip N.Y."/>
        </authorList>
    </citation>
    <scope>PHOSPHORYLATION AT THR-145</scope>
    <scope>MUTAGENESIS OF THR-145</scope>
</reference>
<reference key="17">
    <citation type="journal article" date="2012" name="Proc. Natl. Acad. Sci. U.S.A.">
        <title>N-terminal acetylome analyses and functional insights of the N-terminal acetyltransferase NatB.</title>
        <authorList>
            <person name="Van Damme P."/>
            <person name="Lasa M."/>
            <person name="Polevoda B."/>
            <person name="Gazquez C."/>
            <person name="Elosegui-Artola A."/>
            <person name="Kim D.S."/>
            <person name="De Juan-Pardo E."/>
            <person name="Demeyer K."/>
            <person name="Hole K."/>
            <person name="Larrea E."/>
            <person name="Timmerman E."/>
            <person name="Prieto J."/>
            <person name="Arnesen T."/>
            <person name="Sherman F."/>
            <person name="Gevaert K."/>
            <person name="Aldabe R."/>
        </authorList>
    </citation>
    <scope>ACETYLATION [LARGE SCALE ANALYSIS] AT MET-1</scope>
    <scope>IDENTIFICATION BY MASS SPECTROMETRY [LARGE SCALE ANALYSIS]</scope>
</reference>
<reference key="18">
    <citation type="journal article" date="2015" name="Proteomics">
        <title>N-terminome analysis of the human mitochondrial proteome.</title>
        <authorList>
            <person name="Vaca Jacome A.S."/>
            <person name="Rabilloud T."/>
            <person name="Schaeffer-Reiss C."/>
            <person name="Rompais M."/>
            <person name="Ayoub D."/>
            <person name="Lane L."/>
            <person name="Bairoch A."/>
            <person name="Van Dorsselaer A."/>
            <person name="Carapito C."/>
        </authorList>
    </citation>
    <scope>IDENTIFICATION BY MASS SPECTROMETRY [LARGE SCALE ANALYSIS]</scope>
</reference>
<protein>
    <recommendedName>
        <fullName>Endophilin-B1</fullName>
    </recommendedName>
    <alternativeName>
        <fullName>Bax-interacting factor 1</fullName>
        <shortName>Bif-1</shortName>
    </alternativeName>
    <alternativeName>
        <fullName>SH3 domain-containing GRB2-like protein B1</fullName>
    </alternativeName>
</protein>
<dbReference type="EMBL" id="AF257318">
    <property type="protein sequence ID" value="AAF81225.1"/>
    <property type="status" value="ALT_INIT"/>
    <property type="molecule type" value="mRNA"/>
</dbReference>
<dbReference type="EMBL" id="AF350371">
    <property type="protein sequence ID" value="AAK27365.1"/>
    <property type="molecule type" value="mRNA"/>
</dbReference>
<dbReference type="EMBL" id="AF263293">
    <property type="protein sequence ID" value="AAF73017.1"/>
    <property type="molecule type" value="mRNA"/>
</dbReference>
<dbReference type="EMBL" id="AB007960">
    <property type="protein sequence ID" value="BAD88797.1"/>
    <property type="status" value="ALT_INIT"/>
    <property type="molecule type" value="mRNA"/>
</dbReference>
<dbReference type="EMBL" id="AF151819">
    <property type="protein sequence ID" value="AAD34056.1"/>
    <property type="molecule type" value="mRNA"/>
</dbReference>
<dbReference type="EMBL" id="AK001954">
    <property type="protein sequence ID" value="BAA91999.1"/>
    <property type="molecule type" value="mRNA"/>
</dbReference>
<dbReference type="EMBL" id="AK303710">
    <property type="protein sequence ID" value="BAG64694.1"/>
    <property type="molecule type" value="mRNA"/>
</dbReference>
<dbReference type="EMBL" id="AL049597">
    <property type="status" value="NOT_ANNOTATED_CDS"/>
    <property type="molecule type" value="Genomic_DNA"/>
</dbReference>
<dbReference type="EMBL" id="BC007455">
    <property type="protein sequence ID" value="AAH07455.1"/>
    <property type="molecule type" value="mRNA"/>
</dbReference>
<dbReference type="CCDS" id="CCDS55612.1">
    <molecule id="Q9Y371-2"/>
</dbReference>
<dbReference type="CCDS" id="CCDS55613.1">
    <molecule id="Q9Y371-3"/>
</dbReference>
<dbReference type="CCDS" id="CCDS710.1">
    <molecule id="Q9Y371-1"/>
</dbReference>
<dbReference type="RefSeq" id="NP_001193580.1">
    <property type="nucleotide sequence ID" value="NM_001206651.1"/>
</dbReference>
<dbReference type="RefSeq" id="NP_001193581.1">
    <molecule id="Q9Y371-2"/>
    <property type="nucleotide sequence ID" value="NM_001206652.2"/>
</dbReference>
<dbReference type="RefSeq" id="NP_001193582.1">
    <molecule id="Q9Y371-3"/>
    <property type="nucleotide sequence ID" value="NM_001206653.2"/>
</dbReference>
<dbReference type="RefSeq" id="NP_057093.1">
    <molecule id="Q9Y371-1"/>
    <property type="nucleotide sequence ID" value="NM_016009.5"/>
</dbReference>
<dbReference type="PDB" id="6UP6">
    <property type="method" value="EM"/>
    <property type="resolution" value="9.00 A"/>
    <property type="chains" value="A/B/C/D/E/F/G/H/I/J/K/L/M/N/O/P/Q/R/S/T/V/W/a/b/c/d/e/f/g/h=1-365"/>
</dbReference>
<dbReference type="PDB" id="6UPN">
    <property type="method" value="EM"/>
    <property type="resolution" value="10.00 A"/>
    <property type="chains" value="A/B/C/D/E/F/G/H/I/J/K/L/M/N/O/P/Q/R/S/T/V/W/X/Y/a/b/c/d/e/f=1-365"/>
</dbReference>
<dbReference type="PDB" id="9G2R">
    <property type="method" value="EM"/>
    <property type="resolution" value="3.88 A"/>
    <property type="chains" value="A/B/C/D/E/F/G/H/I/J/K/L=1-365"/>
</dbReference>
<dbReference type="PDB" id="9G2U">
    <property type="method" value="EM"/>
    <property type="resolution" value="3.45 A"/>
    <property type="chains" value="A/B=1-365"/>
</dbReference>
<dbReference type="PDB" id="9G2W">
    <property type="method" value="EM"/>
    <property type="resolution" value="3.60 A"/>
    <property type="chains" value="A/B=1-365"/>
</dbReference>
<dbReference type="PDBsum" id="6UP6"/>
<dbReference type="PDBsum" id="6UPN"/>
<dbReference type="PDBsum" id="9G2R"/>
<dbReference type="PDBsum" id="9G2U"/>
<dbReference type="PDBsum" id="9G2W"/>
<dbReference type="EMDB" id="EMD-20835"/>
<dbReference type="EMDB" id="EMD-20842"/>
<dbReference type="EMDB" id="EMD-50981"/>
<dbReference type="EMDB" id="EMD-50984"/>
<dbReference type="EMDB" id="EMD-50986"/>
<dbReference type="SASBDB" id="Q9Y371"/>
<dbReference type="SMR" id="Q9Y371"/>
<dbReference type="BioGRID" id="119289">
    <property type="interactions" value="125"/>
</dbReference>
<dbReference type="CORUM" id="Q9Y371"/>
<dbReference type="DIP" id="DIP-41970N"/>
<dbReference type="FunCoup" id="Q9Y371">
    <property type="interactions" value="2461"/>
</dbReference>
<dbReference type="IntAct" id="Q9Y371">
    <property type="interactions" value="195"/>
</dbReference>
<dbReference type="MINT" id="Q9Y371"/>
<dbReference type="STRING" id="9606.ENSP00000479919"/>
<dbReference type="TCDB" id="8.A.34.1.4">
    <property type="family name" value="the endophilin (endophilin) family"/>
</dbReference>
<dbReference type="GlyGen" id="Q9Y371">
    <property type="glycosylation" value="2 sites, 1 N-linked glycan (1 site), 1 O-linked glycan (1 site)"/>
</dbReference>
<dbReference type="iPTMnet" id="Q9Y371"/>
<dbReference type="PhosphoSitePlus" id="Q9Y371"/>
<dbReference type="BioMuta" id="SH3GLB1"/>
<dbReference type="DMDM" id="41018158"/>
<dbReference type="REPRODUCTION-2DPAGE" id="IPI00006558"/>
<dbReference type="jPOST" id="Q9Y371"/>
<dbReference type="MassIVE" id="Q9Y371"/>
<dbReference type="PaxDb" id="9606-ENSP00000479919"/>
<dbReference type="PeptideAtlas" id="Q9Y371"/>
<dbReference type="ProteomicsDB" id="5734"/>
<dbReference type="ProteomicsDB" id="85978">
    <molecule id="Q9Y371-1"/>
</dbReference>
<dbReference type="ProteomicsDB" id="85979">
    <molecule id="Q9Y371-2"/>
</dbReference>
<dbReference type="Pumba" id="Q9Y371"/>
<dbReference type="Antibodypedia" id="2824">
    <property type="antibodies" value="552 antibodies from 36 providers"/>
</dbReference>
<dbReference type="DNASU" id="51100"/>
<dbReference type="Ensembl" id="ENST00000370558.8">
    <molecule id="Q9Y371-1"/>
    <property type="protein sequence ID" value="ENSP00000473267.1"/>
    <property type="gene ID" value="ENSG00000097033.15"/>
</dbReference>
<dbReference type="Ensembl" id="ENST00000482504.1">
    <molecule id="Q9Y371-2"/>
    <property type="protein sequence ID" value="ENSP00000418744.1"/>
    <property type="gene ID" value="ENSG00000097033.15"/>
</dbReference>
<dbReference type="Ensembl" id="ENST00000535010.5">
    <molecule id="Q9Y371-3"/>
    <property type="protein sequence ID" value="ENSP00000441355.1"/>
    <property type="gene ID" value="ENSG00000097033.15"/>
</dbReference>
<dbReference type="GeneID" id="51100"/>
<dbReference type="KEGG" id="hsa:51100"/>
<dbReference type="MANE-Select" id="ENST00000370558.8">
    <property type="protein sequence ID" value="ENSP00000473267.1"/>
    <property type="RefSeq nucleotide sequence ID" value="NM_016009.5"/>
    <property type="RefSeq protein sequence ID" value="NP_057093.1"/>
</dbReference>
<dbReference type="UCSC" id="uc001dlw.4">
    <molecule id="Q9Y371-1"/>
    <property type="organism name" value="human"/>
</dbReference>
<dbReference type="AGR" id="HGNC:10833"/>
<dbReference type="CTD" id="51100"/>
<dbReference type="DisGeNET" id="51100"/>
<dbReference type="GeneCards" id="SH3GLB1"/>
<dbReference type="HGNC" id="HGNC:10833">
    <property type="gene designation" value="SH3GLB1"/>
</dbReference>
<dbReference type="HPA" id="ENSG00000097033">
    <property type="expression patterns" value="Low tissue specificity"/>
</dbReference>
<dbReference type="MIM" id="609287">
    <property type="type" value="gene"/>
</dbReference>
<dbReference type="neXtProt" id="NX_Q9Y371"/>
<dbReference type="OpenTargets" id="ENSG00000097033"/>
<dbReference type="PharmGKB" id="PA35739"/>
<dbReference type="VEuPathDB" id="HostDB:ENSG00000097033"/>
<dbReference type="eggNOG" id="KOG3725">
    <property type="taxonomic scope" value="Eukaryota"/>
</dbReference>
<dbReference type="GeneTree" id="ENSGT00940000155667"/>
<dbReference type="HOGENOM" id="CLU_043817_1_0_1"/>
<dbReference type="InParanoid" id="Q9Y371"/>
<dbReference type="OMA" id="ETTYYAQ"/>
<dbReference type="OrthoDB" id="14167at2759"/>
<dbReference type="PAN-GO" id="Q9Y371">
    <property type="GO annotations" value="2 GO annotations based on evolutionary models"/>
</dbReference>
<dbReference type="PhylomeDB" id="Q9Y371"/>
<dbReference type="TreeFam" id="TF313281"/>
<dbReference type="PathwayCommons" id="Q9Y371"/>
<dbReference type="SignaLink" id="Q9Y371"/>
<dbReference type="SIGNOR" id="Q9Y371"/>
<dbReference type="BioGRID-ORCS" id="51100">
    <property type="hits" value="14 hits in 1159 CRISPR screens"/>
</dbReference>
<dbReference type="CD-CODE" id="91857CE7">
    <property type="entry name" value="Nucleolus"/>
</dbReference>
<dbReference type="ChiTaRS" id="SH3GLB1">
    <property type="organism name" value="human"/>
</dbReference>
<dbReference type="GeneWiki" id="SH3GLB1"/>
<dbReference type="GenomeRNAi" id="51100"/>
<dbReference type="Pharos" id="Q9Y371">
    <property type="development level" value="Tbio"/>
</dbReference>
<dbReference type="PRO" id="PR:Q9Y371"/>
<dbReference type="Proteomes" id="UP000005640">
    <property type="component" value="Chromosome 1"/>
</dbReference>
<dbReference type="RNAct" id="Q9Y371">
    <property type="molecule type" value="protein"/>
</dbReference>
<dbReference type="Bgee" id="ENSG00000097033">
    <property type="expression patterns" value="Expressed in tibialis anterior and 209 other cell types or tissues"/>
</dbReference>
<dbReference type="ExpressionAtlas" id="Q9Y371">
    <property type="expression patterns" value="baseline and differential"/>
</dbReference>
<dbReference type="GO" id="GO:0000421">
    <property type="term" value="C:autophagosome membrane"/>
    <property type="evidence" value="ECO:0000314"/>
    <property type="project" value="UniProtKB"/>
</dbReference>
<dbReference type="GO" id="GO:0005737">
    <property type="term" value="C:cytoplasm"/>
    <property type="evidence" value="ECO:0000314"/>
    <property type="project" value="HGNC-UCL"/>
</dbReference>
<dbReference type="GO" id="GO:0031410">
    <property type="term" value="C:cytoplasmic vesicle"/>
    <property type="evidence" value="ECO:0007669"/>
    <property type="project" value="UniProtKB-KW"/>
</dbReference>
<dbReference type="GO" id="GO:0005829">
    <property type="term" value="C:cytosol"/>
    <property type="evidence" value="ECO:0000314"/>
    <property type="project" value="HPA"/>
</dbReference>
<dbReference type="GO" id="GO:0000139">
    <property type="term" value="C:Golgi membrane"/>
    <property type="evidence" value="ECO:0007669"/>
    <property type="project" value="UniProtKB-SubCell"/>
</dbReference>
<dbReference type="GO" id="GO:0016020">
    <property type="term" value="C:membrane"/>
    <property type="evidence" value="ECO:0000318"/>
    <property type="project" value="GO_Central"/>
</dbReference>
<dbReference type="GO" id="GO:0030496">
    <property type="term" value="C:midbody"/>
    <property type="evidence" value="ECO:0000314"/>
    <property type="project" value="UniProtKB"/>
</dbReference>
<dbReference type="GO" id="GO:0005741">
    <property type="term" value="C:mitochondrial outer membrane"/>
    <property type="evidence" value="ECO:0007669"/>
    <property type="project" value="UniProtKB-SubCell"/>
</dbReference>
<dbReference type="GO" id="GO:0016604">
    <property type="term" value="C:nuclear body"/>
    <property type="evidence" value="ECO:0000314"/>
    <property type="project" value="HPA"/>
</dbReference>
<dbReference type="GO" id="GO:0032991">
    <property type="term" value="C:protein-containing complex"/>
    <property type="evidence" value="ECO:0000314"/>
    <property type="project" value="UniProtKB"/>
</dbReference>
<dbReference type="GO" id="GO:0045296">
    <property type="term" value="F:cadherin binding"/>
    <property type="evidence" value="ECO:0007005"/>
    <property type="project" value="BHF-UCL"/>
</dbReference>
<dbReference type="GO" id="GO:0005504">
    <property type="term" value="F:fatty acid binding"/>
    <property type="evidence" value="ECO:0007669"/>
    <property type="project" value="Ensembl"/>
</dbReference>
<dbReference type="GO" id="GO:0042802">
    <property type="term" value="F:identical protein binding"/>
    <property type="evidence" value="ECO:0000353"/>
    <property type="project" value="IntAct"/>
</dbReference>
<dbReference type="GO" id="GO:0042171">
    <property type="term" value="F:lysophosphatidic acid acyltransferase activity"/>
    <property type="evidence" value="ECO:0007669"/>
    <property type="project" value="Ensembl"/>
</dbReference>
<dbReference type="GO" id="GO:0141038">
    <property type="term" value="F:phosphatidylinositol 3-kinase activator activity"/>
    <property type="evidence" value="ECO:0007669"/>
    <property type="project" value="Ensembl"/>
</dbReference>
<dbReference type="GO" id="GO:0042803">
    <property type="term" value="F:protein homodimerization activity"/>
    <property type="evidence" value="ECO:0000353"/>
    <property type="project" value="HGNC-UCL"/>
</dbReference>
<dbReference type="GO" id="GO:0051084">
    <property type="term" value="P:'de novo' post-translational protein folding"/>
    <property type="evidence" value="ECO:0007669"/>
    <property type="project" value="Ensembl"/>
</dbReference>
<dbReference type="GO" id="GO:0006915">
    <property type="term" value="P:apoptotic process"/>
    <property type="evidence" value="ECO:0007669"/>
    <property type="project" value="UniProtKB-KW"/>
</dbReference>
<dbReference type="GO" id="GO:0048102">
    <property type="term" value="P:autophagic cell death"/>
    <property type="evidence" value="ECO:0000315"/>
    <property type="project" value="UniProtKB"/>
</dbReference>
<dbReference type="GO" id="GO:0006914">
    <property type="term" value="P:autophagy"/>
    <property type="evidence" value="ECO:0007669"/>
    <property type="project" value="UniProtKB-KW"/>
</dbReference>
<dbReference type="GO" id="GO:0034198">
    <property type="term" value="P:cellular response to amino acid starvation"/>
    <property type="evidence" value="ECO:0000315"/>
    <property type="project" value="UniProtKB"/>
</dbReference>
<dbReference type="GO" id="GO:0042149">
    <property type="term" value="P:cellular response to glucose starvation"/>
    <property type="evidence" value="ECO:0000315"/>
    <property type="project" value="UniProtKB"/>
</dbReference>
<dbReference type="GO" id="GO:0090148">
    <property type="term" value="P:membrane fission"/>
    <property type="evidence" value="ECO:0000315"/>
    <property type="project" value="UniProtKB"/>
</dbReference>
<dbReference type="GO" id="GO:0061024">
    <property type="term" value="P:membrane organization"/>
    <property type="evidence" value="ECO:0000318"/>
    <property type="project" value="GO_Central"/>
</dbReference>
<dbReference type="GO" id="GO:0006654">
    <property type="term" value="P:phosphatidic acid biosynthetic process"/>
    <property type="evidence" value="ECO:0007669"/>
    <property type="project" value="Ensembl"/>
</dbReference>
<dbReference type="GO" id="GO:2000786">
    <property type="term" value="P:positive regulation of autophagosome assembly"/>
    <property type="evidence" value="ECO:0000315"/>
    <property type="project" value="UniProtKB"/>
</dbReference>
<dbReference type="GO" id="GO:0010508">
    <property type="term" value="P:positive regulation of autophagy"/>
    <property type="evidence" value="ECO:0000315"/>
    <property type="project" value="UniProtKB"/>
</dbReference>
<dbReference type="GO" id="GO:1903527">
    <property type="term" value="P:positive regulation of membrane tubulation"/>
    <property type="evidence" value="ECO:0000315"/>
    <property type="project" value="UniProtKB"/>
</dbReference>
<dbReference type="GO" id="GO:1903955">
    <property type="term" value="P:positive regulation of protein targeting to mitochondrion"/>
    <property type="evidence" value="ECO:0007001"/>
    <property type="project" value="ParkinsonsUK-UCL"/>
</dbReference>
<dbReference type="GO" id="GO:0031334">
    <property type="term" value="P:positive regulation of protein-containing complex assembly"/>
    <property type="evidence" value="ECO:0000314"/>
    <property type="project" value="UniProtKB"/>
</dbReference>
<dbReference type="GO" id="GO:1903778">
    <property type="term" value="P:protein localization to vacuolar membrane"/>
    <property type="evidence" value="ECO:0000315"/>
    <property type="project" value="UniProtKB"/>
</dbReference>
<dbReference type="GO" id="GO:0032801">
    <property type="term" value="P:receptor catabolic process"/>
    <property type="evidence" value="ECO:0000315"/>
    <property type="project" value="UniProtKB"/>
</dbReference>
<dbReference type="GO" id="GO:0032465">
    <property type="term" value="P:regulation of cytokinesis"/>
    <property type="evidence" value="ECO:0000315"/>
    <property type="project" value="UniProtKB"/>
</dbReference>
<dbReference type="GO" id="GO:0016241">
    <property type="term" value="P:regulation of macroautophagy"/>
    <property type="evidence" value="ECO:0000304"/>
    <property type="project" value="ParkinsonsUK-UCL"/>
</dbReference>
<dbReference type="GO" id="GO:0031647">
    <property type="term" value="P:regulation of protein stability"/>
    <property type="evidence" value="ECO:0007001"/>
    <property type="project" value="ParkinsonsUK-UCL"/>
</dbReference>
<dbReference type="CDD" id="cd07616">
    <property type="entry name" value="BAR_Endophilin_B1"/>
    <property type="match status" value="1"/>
</dbReference>
<dbReference type="CDD" id="cd11945">
    <property type="entry name" value="SH3_Endophilin_B1"/>
    <property type="match status" value="1"/>
</dbReference>
<dbReference type="FunFam" id="1.20.1270.60:FF:000017">
    <property type="entry name" value="endophilin-B2 isoform X1"/>
    <property type="match status" value="1"/>
</dbReference>
<dbReference type="FunFam" id="2.30.30.40:FF:000028">
    <property type="entry name" value="endophilin-B2 isoform X1"/>
    <property type="match status" value="1"/>
</dbReference>
<dbReference type="Gene3D" id="1.20.1270.60">
    <property type="entry name" value="Arfaptin homology (AH) domain/BAR domain"/>
    <property type="match status" value="1"/>
</dbReference>
<dbReference type="Gene3D" id="2.30.30.40">
    <property type="entry name" value="SH3 Domains"/>
    <property type="match status" value="1"/>
</dbReference>
<dbReference type="InterPro" id="IPR027267">
    <property type="entry name" value="AH/BAR_dom_sf"/>
</dbReference>
<dbReference type="InterPro" id="IPR004148">
    <property type="entry name" value="BAR_dom"/>
</dbReference>
<dbReference type="InterPro" id="IPR050384">
    <property type="entry name" value="Endophilin_SH3RF"/>
</dbReference>
<dbReference type="InterPro" id="IPR036028">
    <property type="entry name" value="SH3-like_dom_sf"/>
</dbReference>
<dbReference type="InterPro" id="IPR001452">
    <property type="entry name" value="SH3_domain"/>
</dbReference>
<dbReference type="InterPro" id="IPR035695">
    <property type="entry name" value="SH3GLB1_BAR"/>
</dbReference>
<dbReference type="InterPro" id="IPR028503">
    <property type="entry name" value="SH3GLB_SH3"/>
</dbReference>
<dbReference type="PANTHER" id="PTHR14167:SF52">
    <property type="entry name" value="ENDOPHILIN-B1"/>
    <property type="match status" value="1"/>
</dbReference>
<dbReference type="PANTHER" id="PTHR14167">
    <property type="entry name" value="SH3 DOMAIN-CONTAINING"/>
    <property type="match status" value="1"/>
</dbReference>
<dbReference type="Pfam" id="PF03114">
    <property type="entry name" value="BAR"/>
    <property type="match status" value="1"/>
</dbReference>
<dbReference type="Pfam" id="PF14604">
    <property type="entry name" value="SH3_9"/>
    <property type="match status" value="1"/>
</dbReference>
<dbReference type="SMART" id="SM00721">
    <property type="entry name" value="BAR"/>
    <property type="match status" value="1"/>
</dbReference>
<dbReference type="SMART" id="SM00326">
    <property type="entry name" value="SH3"/>
    <property type="match status" value="1"/>
</dbReference>
<dbReference type="SUPFAM" id="SSF103657">
    <property type="entry name" value="BAR/IMD domain-like"/>
    <property type="match status" value="1"/>
</dbReference>
<dbReference type="SUPFAM" id="SSF50044">
    <property type="entry name" value="SH3-domain"/>
    <property type="match status" value="1"/>
</dbReference>
<dbReference type="PROSITE" id="PS51021">
    <property type="entry name" value="BAR"/>
    <property type="match status" value="1"/>
</dbReference>
<dbReference type="PROSITE" id="PS50002">
    <property type="entry name" value="SH3"/>
    <property type="match status" value="1"/>
</dbReference>
<feature type="chain" id="PRO_0000146753" description="Endophilin-B1">
    <location>
        <begin position="1"/>
        <end position="365"/>
    </location>
</feature>
<feature type="domain" description="BAR" evidence="5">
    <location>
        <begin position="27"/>
        <end position="261"/>
    </location>
</feature>
<feature type="domain" description="SH3" evidence="4">
    <location>
        <begin position="305"/>
        <end position="365"/>
    </location>
</feature>
<feature type="region of interest" description="Required for membrane binding" evidence="12">
    <location>
        <begin position="1"/>
        <end position="37"/>
    </location>
</feature>
<feature type="region of interest" description="Membrane-binding amphipathic helix">
    <location>
        <begin position="1"/>
        <end position="30"/>
    </location>
</feature>
<feature type="coiled-coil region" evidence="3">
    <location>
        <begin position="155"/>
        <end position="195"/>
    </location>
</feature>
<feature type="modified residue" description="N-acetylmethionine" evidence="18">
    <location>
        <position position="1"/>
    </location>
</feature>
<feature type="modified residue" description="Phosphothreonine; by CDK5" evidence="13">
    <location>
        <position position="145"/>
    </location>
</feature>
<feature type="splice variant" id="VSP_044895" description="In isoform 3." evidence="15">
    <location>
        <begin position="1"/>
        <end position="100"/>
    </location>
</feature>
<feature type="splice variant" id="VSP_009276" description="In isoform 2." evidence="14">
    <original>S</original>
    <variation>SQLNSARLEGDNIMIWAEEVTK</variation>
    <location>
        <position position="190"/>
    </location>
</feature>
<feature type="mutagenesis site" description="Abolishes interaction with BAX." evidence="6">
    <original>V</original>
    <variation>M</variation>
    <location>
        <position position="8"/>
    </location>
</feature>
<feature type="mutagenesis site" description="Reduced CDK5-mediated phosphorylation and impaired dimerization." evidence="13">
    <original>T</original>
    <variation>A</variation>
    <location>
        <position position="145"/>
    </location>
</feature>
<feature type="mutagenesis site" description="Spontaneous dimerization." evidence="13">
    <original>T</original>
    <variation>E</variation>
    <location>
        <position position="145"/>
    </location>
</feature>
<feature type="helix" evidence="19">
    <location>
        <begin position="12"/>
        <end position="30"/>
    </location>
</feature>
<feature type="strand" evidence="19">
    <location>
        <begin position="31"/>
        <end position="33"/>
    </location>
</feature>
<feature type="helix" evidence="19">
    <location>
        <begin position="40"/>
        <end position="67"/>
    </location>
</feature>
<feature type="helix" evidence="19">
    <location>
        <begin position="71"/>
        <end position="75"/>
    </location>
</feature>
<feature type="helix" evidence="19">
    <location>
        <begin position="93"/>
        <end position="108"/>
    </location>
</feature>
<feature type="strand" evidence="19">
    <location>
        <begin position="110"/>
        <end position="112"/>
    </location>
</feature>
<feature type="helix" evidence="19">
    <location>
        <begin position="113"/>
        <end position="142"/>
    </location>
</feature>
<feature type="helix" evidence="19">
    <location>
        <begin position="144"/>
        <end position="153"/>
    </location>
</feature>
<feature type="helix" evidence="19">
    <location>
        <begin position="155"/>
        <end position="180"/>
    </location>
</feature>
<feature type="helix" evidence="19">
    <location>
        <begin position="185"/>
        <end position="251"/>
    </location>
</feature>
<comment type="function">
    <text evidence="2 8 9 10 11 12">May be required for normal outer mitochondrial membrane dynamics (PubMed:15452144). Required for coatomer-mediated retrograde transport in certain cells (By similarity). May recruit other proteins to membranes with high curvature. May promote membrane fusion (PubMed:11604418). Involved in activation of caspase-dependent apoptosis by promoting BAX/BAK1 activation (PubMed:16227588). Isoform 1 acts proapoptotic in fibroblasts (By similarity). Involved in caspase-independent apoptosis during nutrition starvation and involved in the regulation of autophagy. Activates lipid kinase activity of PIK3C3 during autophagy probably by associating with the PI3K complex II (PI3KC3-C2) (PubMed:17891140). Associated with PI3KC3-C2 during autophagy may regulate the trafficking of ATG9A from the Golgi complex to the peripheral cytoplasm for the formation of autophagosomes by inducing Golgi membrane tubulation and fragmentation (PubMed:21068542). Involved in regulation of degradative endocytic trafficking and cytokinesis, probably in the context of PI3KC3-C2 (PubMed:20643123). Isoform 2 acts antiapoptotic in neuronal cells; involved in maintenance of mitochondrial morphology and promotes neuronal viability (By similarity).</text>
</comment>
<comment type="subunit">
    <text evidence="2 6 7 10">Homodimer, and heterodimer with SH3GLB2 (PubMed:11161816). Binds BAX; induction of apoptosis augments BAX binding (PubMed:11161816, PubMed:11259440). Binds DNM1, HTT, AMPH, BIN1 and ARFGAP1 (By similarity). Interacts with UVRAG; UVRAG bridges the interaction to BECN1 indicative for an association with the PI3K complex II (PI3KC3-C2) (PubMed:17891140, PubMed:20643123).</text>
</comment>
<comment type="interaction">
    <interactant intactId="EBI-2623095">
        <id>Q9Y371</id>
    </interactant>
    <interactant intactId="EBI-25873349">
        <id>P45844-6</id>
        <label>ABCG1</label>
    </interactant>
    <organismsDiffer>false</organismsDiffer>
    <experiments>3</experiments>
</comment>
<comment type="interaction">
    <interactant intactId="EBI-2623095">
        <id>Q9Y371</id>
    </interactant>
    <interactant intactId="EBI-21854797">
        <id>Q7Z5M8-2</id>
        <label>ABHD12B</label>
    </interactant>
    <organismsDiffer>false</organismsDiffer>
    <experiments>3</experiments>
</comment>
<comment type="interaction">
    <interactant intactId="EBI-2623095">
        <id>Q9Y371</id>
    </interactant>
    <interactant intactId="EBI-2813554">
        <id>Q8WTS1</id>
        <label>ABHD5</label>
    </interactant>
    <organismsDiffer>false</organismsDiffer>
    <experiments>3</experiments>
</comment>
<comment type="interaction">
    <interactant intactId="EBI-2623095">
        <id>Q9Y371</id>
    </interactant>
    <interactant intactId="EBI-2876502">
        <id>Q96CM8</id>
        <label>ACSF2</label>
    </interactant>
    <organismsDiffer>false</organismsDiffer>
    <experiments>3</experiments>
</comment>
<comment type="interaction">
    <interactant intactId="EBI-2623095">
        <id>Q9Y371</id>
    </interactant>
    <interactant intactId="EBI-712648">
        <id>O95994</id>
        <label>AGR2</label>
    </interactant>
    <organismsDiffer>false</organismsDiffer>
    <experiments>3</experiments>
</comment>
<comment type="interaction">
    <interactant intactId="EBI-2623095">
        <id>Q9Y371</id>
    </interactant>
    <interactant intactId="EBI-11522760">
        <id>Q6RW13-2</id>
        <label>AGTRAP</label>
    </interactant>
    <organismsDiffer>false</organismsDiffer>
    <experiments>3</experiments>
</comment>
<comment type="interaction">
    <interactant intactId="EBI-2623095">
        <id>Q9Y371</id>
    </interactant>
    <interactant intactId="EBI-8466265">
        <id>Q96MA6</id>
        <label>AK8</label>
    </interactant>
    <organismsDiffer>false</organismsDiffer>
    <experiments>3</experiments>
</comment>
<comment type="interaction">
    <interactant intactId="EBI-2623095">
        <id>Q9Y371</id>
    </interactant>
    <interactant intactId="EBI-22006248">
        <id>Q5T2L2</id>
        <label>AKR1C8</label>
    </interactant>
    <organismsDiffer>false</organismsDiffer>
    <experiments>3</experiments>
</comment>
<comment type="interaction">
    <interactant intactId="EBI-2623095">
        <id>Q9Y371</id>
    </interactant>
    <interactant intactId="EBI-9089544">
        <id>Q96Q83-2</id>
        <label>ALKBH3</label>
    </interactant>
    <organismsDiffer>false</organismsDiffer>
    <experiments>3</experiments>
</comment>
<comment type="interaction">
    <interactant intactId="EBI-2623095">
        <id>Q9Y371</id>
    </interactant>
    <interactant intactId="EBI-8464238">
        <id>Q9NU02</id>
        <label>ANKEF1</label>
    </interactant>
    <organismsDiffer>false</organismsDiffer>
    <experiments>3</experiments>
</comment>
<comment type="interaction">
    <interactant intactId="EBI-2623095">
        <id>Q9Y371</id>
    </interactant>
    <interactant intactId="EBI-701692">
        <id>P02647</id>
        <label>APOA1</label>
    </interactant>
    <organismsDiffer>false</organismsDiffer>
    <experiments>3</experiments>
</comment>
<comment type="interaction">
    <interactant intactId="EBI-2623095">
        <id>Q9Y371</id>
    </interactant>
    <interactant intactId="EBI-1222447">
        <id>P06727</id>
        <label>APOA4</label>
    </interactant>
    <organismsDiffer>false</organismsDiffer>
    <experiments>3</experiments>
</comment>
<comment type="interaction">
    <interactant intactId="EBI-2623095">
        <id>Q9Y371</id>
    </interactant>
    <interactant intactId="EBI-2114682">
        <id>P02749</id>
        <label>APOH</label>
    </interactant>
    <organismsDiffer>false</organismsDiffer>
    <experiments>3</experiments>
</comment>
<comment type="interaction">
    <interactant intactId="EBI-2623095">
        <id>Q9Y371</id>
    </interactant>
    <interactant intactId="EBI-638194">
        <id>P53365</id>
        <label>ARFIP2</label>
    </interactant>
    <organismsDiffer>false</organismsDiffer>
    <experiments>6</experiments>
</comment>
<comment type="interaction">
    <interactant intactId="EBI-2623095">
        <id>Q9Y371</id>
    </interactant>
    <interactant intactId="EBI-492498">
        <id>P18848</id>
        <label>ATF4</label>
    </interactant>
    <organismsDiffer>false</organismsDiffer>
    <experiments>3</experiments>
</comment>
<comment type="interaction">
    <interactant intactId="EBI-2623095">
        <id>Q9Y371</id>
    </interactant>
    <interactant intactId="EBI-25836940">
        <id>C1IDX9</id>
        <label>ATG12</label>
    </interactant>
    <organismsDiffer>false</organismsDiffer>
    <experiments>3</experiments>
</comment>
<comment type="interaction">
    <interactant intactId="EBI-2623095">
        <id>Q9Y371</id>
    </interactant>
    <interactant intactId="EBI-1044001">
        <id>O75964</id>
        <label>ATP5MG</label>
    </interactant>
    <organismsDiffer>false</organismsDiffer>
    <experiments>3</experiments>
</comment>
<comment type="interaction">
    <interactant intactId="EBI-2623095">
        <id>Q9Y371</id>
    </interactant>
    <interactant intactId="EBI-8994378">
        <id>Q14032</id>
        <label>BAAT</label>
    </interactant>
    <organismsDiffer>false</organismsDiffer>
    <experiments>3</experiments>
</comment>
<comment type="interaction">
    <interactant intactId="EBI-2623095">
        <id>Q9Y371</id>
    </interactant>
    <interactant intactId="EBI-7996695">
        <id>Q8WZ55</id>
        <label>BSND</label>
    </interactant>
    <organismsDiffer>false</organismsDiffer>
    <experiments>3</experiments>
</comment>
<comment type="interaction">
    <interactant intactId="EBI-2623095">
        <id>Q9Y371</id>
    </interactant>
    <interactant intactId="EBI-3844053">
        <id>Q13901</id>
        <label>C1D</label>
    </interactant>
    <organismsDiffer>false</organismsDiffer>
    <experiments>6</experiments>
</comment>
<comment type="interaction">
    <interactant intactId="EBI-2623095">
        <id>Q9Y371</id>
    </interactant>
    <interactant intactId="EBI-10264911">
        <id>Q8N1A6</id>
        <label>C4orf33</label>
    </interactant>
    <organismsDiffer>false</organismsDiffer>
    <experiments>3</experiments>
</comment>
<comment type="interaction">
    <interactant intactId="EBI-2623095">
        <id>Q9Y371</id>
    </interactant>
    <interactant intactId="EBI-8652492">
        <id>Q9UGQ2</id>
        <label>CACFD1</label>
    </interactant>
    <organismsDiffer>false</organismsDiffer>
    <experiments>3</experiments>
</comment>
<comment type="interaction">
    <interactant intactId="EBI-2623095">
        <id>Q9Y371</id>
    </interactant>
    <interactant intactId="EBI-11532021">
        <id>P20807-4</id>
        <label>CAPN3</label>
    </interactant>
    <organismsDiffer>false</organismsDiffer>
    <experiments>3</experiments>
</comment>
<comment type="interaction">
    <interactant intactId="EBI-2623095">
        <id>Q9Y371</id>
    </interactant>
    <interactant intactId="EBI-395261">
        <id>P24863</id>
        <label>CCNC</label>
    </interactant>
    <organismsDiffer>false</organismsDiffer>
    <experiments>3</experiments>
</comment>
<comment type="interaction">
    <interactant intactId="EBI-2623095">
        <id>Q9Y371</id>
    </interactant>
    <interactant intactId="EBI-25873837">
        <id>Q9UK58-5</id>
        <label>CCNL1</label>
    </interactant>
    <organismsDiffer>false</organismsDiffer>
    <experiments>3</experiments>
</comment>
<comment type="interaction">
    <interactant intactId="EBI-2623095">
        <id>Q9Y371</id>
    </interactant>
    <interactant intactId="EBI-353826">
        <id>P01730</id>
        <label>CD4</label>
    </interactant>
    <organismsDiffer>false</organismsDiffer>
    <experiments>3</experiments>
</comment>
<comment type="interaction">
    <interactant intactId="EBI-2623095">
        <id>Q9Y371</id>
    </interactant>
    <interactant intactId="EBI-712959">
        <id>O15182</id>
        <label>CETN3</label>
    </interactant>
    <organismsDiffer>false</organismsDiffer>
    <experiments>3</experiments>
</comment>
<comment type="interaction">
    <interactant intactId="EBI-2623095">
        <id>Q9Y371</id>
    </interactant>
    <interactant intactId="EBI-7062247">
        <id>Q9UHD4</id>
        <label>CIDEB</label>
    </interactant>
    <organismsDiffer>false</organismsDiffer>
    <experiments>3</experiments>
</comment>
<comment type="interaction">
    <interactant intactId="EBI-2623095">
        <id>Q9Y371</id>
    </interactant>
    <interactant intactId="EBI-4401010">
        <id>P09496-2</id>
        <label>CLTA</label>
    </interactant>
    <organismsDiffer>false</organismsDiffer>
    <experiments>3</experiments>
</comment>
<comment type="interaction">
    <interactant intactId="EBI-2623095">
        <id>Q9Y371</id>
    </interactant>
    <interactant intactId="EBI-2548702">
        <id>Q96DZ9</id>
        <label>CMTM5</label>
    </interactant>
    <organismsDiffer>false</organismsDiffer>
    <experiments>3</experiments>
</comment>
<comment type="interaction">
    <interactant intactId="EBI-2623095">
        <id>Q9Y371</id>
    </interactant>
    <interactant intactId="EBI-11522780">
        <id>Q96DZ9-2</id>
        <label>CMTM5</label>
    </interactant>
    <organismsDiffer>false</organismsDiffer>
    <experiments>3</experiments>
</comment>
<comment type="interaction">
    <interactant intactId="EBI-2623095">
        <id>Q9Y371</id>
    </interactant>
    <interactant intactId="EBI-745535">
        <id>Q8NI60</id>
        <label>COQ8A</label>
    </interactant>
    <organismsDiffer>false</organismsDiffer>
    <experiments>11</experiments>
</comment>
<comment type="interaction">
    <interactant intactId="EBI-2623095">
        <id>Q9Y371</id>
    </interactant>
    <interactant intactId="EBI-713677">
        <id>Q9UGL9</id>
        <label>CRCT1</label>
    </interactant>
    <organismsDiffer>false</organismsDiffer>
    <experiments>3</experiments>
</comment>
<comment type="interaction">
    <interactant intactId="EBI-2623095">
        <id>Q9Y371</id>
    </interactant>
    <interactant intactId="EBI-8637742">
        <id>Q53TN4</id>
        <label>CYBRD1</label>
    </interactant>
    <organismsDiffer>false</organismsDiffer>
    <experiments>3</experiments>
</comment>
<comment type="interaction">
    <interactant intactId="EBI-2623095">
        <id>Q9Y371</id>
    </interactant>
    <interactant intactId="EBI-2951522">
        <id>P10632</id>
        <label>CYP2C8</label>
    </interactant>
    <organismsDiffer>false</organismsDiffer>
    <experiments>3</experiments>
</comment>
<comment type="interaction">
    <interactant intactId="EBI-2623095">
        <id>Q9Y371</id>
    </interactant>
    <interactant intactId="EBI-12878374">
        <id>Q9BSY9</id>
        <label>DESI2</label>
    </interactant>
    <organismsDiffer>false</organismsDiffer>
    <experiments>3</experiments>
</comment>
<comment type="interaction">
    <interactant intactId="EBI-2623095">
        <id>Q9Y371</id>
    </interactant>
    <interactant intactId="EBI-746300">
        <id>Q96LJ7</id>
        <label>DHRS1</label>
    </interactant>
    <organismsDiffer>false</organismsDiffer>
    <experiments>3</experiments>
</comment>
<comment type="interaction">
    <interactant intactId="EBI-2623095">
        <id>Q9Y371</id>
    </interactant>
    <interactant intactId="EBI-296550">
        <id>Q96KC8</id>
        <label>DNAJC1</label>
    </interactant>
    <organismsDiffer>false</organismsDiffer>
    <experiments>3</experiments>
</comment>
<comment type="interaction">
    <interactant intactId="EBI-2623095">
        <id>Q9Y371</id>
    </interactant>
    <interactant intactId="EBI-748520">
        <id>Q96BY6</id>
        <label>DOCK10</label>
    </interactant>
    <organismsDiffer>false</organismsDiffer>
    <experiments>3</experiments>
</comment>
<comment type="interaction">
    <interactant intactId="EBI-2623095">
        <id>Q9Y371</id>
    </interactant>
    <interactant intactId="EBI-711990">
        <id>O00303</id>
        <label>EIF3F</label>
    </interactant>
    <organismsDiffer>false</organismsDiffer>
    <experiments>3</experiments>
</comment>
<comment type="interaction">
    <interactant intactId="EBI-2623095">
        <id>Q9Y371</id>
    </interactant>
    <interactant intactId="EBI-395274">
        <id>O00472</id>
        <label>ELL2</label>
    </interactant>
    <organismsDiffer>false</organismsDiffer>
    <experiments>3</experiments>
</comment>
<comment type="interaction">
    <interactant intactId="EBI-2623095">
        <id>Q9Y371</id>
    </interactant>
    <interactant intactId="EBI-25836908">
        <id>O95278-6</id>
        <label>EPM2A</label>
    </interactant>
    <organismsDiffer>false</organismsDiffer>
    <experiments>3</experiments>
</comment>
<comment type="interaction">
    <interactant intactId="EBI-2623095">
        <id>Q9Y371</id>
    </interactant>
    <interactant intactId="EBI-10973142">
        <id>Q9NRY5</id>
        <label>FAM114A2</label>
    </interactant>
    <organismsDiffer>false</organismsDiffer>
    <experiments>3</experiments>
</comment>
<comment type="interaction">
    <interactant intactId="EBI-2623095">
        <id>Q9Y371</id>
    </interactant>
    <interactant intactId="EBI-12201693">
        <id>Q8N128-2</id>
        <label>FAM177A1</label>
    </interactant>
    <organismsDiffer>false</organismsDiffer>
    <experiments>3</experiments>
</comment>
<comment type="interaction">
    <interactant intactId="EBI-2623095">
        <id>Q9Y371</id>
    </interactant>
    <interactant intactId="EBI-8468186">
        <id>Q8IZU1</id>
        <label>FAM9A</label>
    </interactant>
    <organismsDiffer>false</organismsDiffer>
    <experiments>3</experiments>
</comment>
<comment type="interaction">
    <interactant intactId="EBI-2623095">
        <id>Q9Y371</id>
    </interactant>
    <interactant intactId="EBI-1055752">
        <id>Q9NYY8</id>
        <label>FASTKD2</label>
    </interactant>
    <organismsDiffer>false</organismsDiffer>
    <experiments>3</experiments>
</comment>
<comment type="interaction">
    <interactant intactId="EBI-2623095">
        <id>Q9Y371</id>
    </interactant>
    <interactant intactId="EBI-11090973">
        <id>Q9NQ89</id>
        <label>FERRY3</label>
    </interactant>
    <organismsDiffer>false</organismsDiffer>
    <experiments>3</experiments>
</comment>
<comment type="interaction">
    <interactant intactId="EBI-2623095">
        <id>Q9Y371</id>
    </interactant>
    <interactant intactId="EBI-9640259">
        <id>P02671-2</id>
        <label>FGA</label>
    </interactant>
    <organismsDiffer>false</organismsDiffer>
    <experiments>3</experiments>
</comment>
<comment type="interaction">
    <interactant intactId="EBI-2623095">
        <id>Q9Y371</id>
    </interactant>
    <interactant intactId="EBI-25872794">
        <id>P49771-3</id>
        <label>FLT3LG</label>
    </interactant>
    <organismsDiffer>false</organismsDiffer>
    <experiments>3</experiments>
</comment>
<comment type="interaction">
    <interactant intactId="EBI-2623095">
        <id>Q9Y371</id>
    </interactant>
    <interactant intactId="EBI-3059266">
        <id>Q8IVP5</id>
        <label>FUNDC1</label>
    </interactant>
    <organismsDiffer>false</organismsDiffer>
    <experiments>3</experiments>
</comment>
<comment type="interaction">
    <interactant intactId="EBI-2623095">
        <id>Q9Y371</id>
    </interactant>
    <interactant intactId="EBI-25872807">
        <id>Q6P7E6</id>
        <label>FUT6</label>
    </interactant>
    <organismsDiffer>false</organismsDiffer>
    <experiments>3</experiments>
</comment>
<comment type="interaction">
    <interactant intactId="EBI-2623095">
        <id>Q9Y371</id>
    </interactant>
    <interactant intactId="EBI-448167">
        <id>P24522</id>
        <label>GADD45A</label>
    </interactant>
    <organismsDiffer>false</organismsDiffer>
    <experiments>2</experiments>
</comment>
<comment type="interaction">
    <interactant intactId="EBI-2623095">
        <id>Q9Y371</id>
    </interactant>
    <interactant intactId="EBI-2868909">
        <id>Q9H3K2</id>
        <label>GHITM</label>
    </interactant>
    <organismsDiffer>false</organismsDiffer>
    <experiments>3</experiments>
</comment>
<comment type="interaction">
    <interactant intactId="EBI-2623095">
        <id>Q9Y371</id>
    </interactant>
    <interactant intactId="EBI-11991950">
        <id>Q8WWP7</id>
        <label>GIMAP1</label>
    </interactant>
    <organismsDiffer>false</organismsDiffer>
    <experiments>3</experiments>
</comment>
<comment type="interaction">
    <interactant intactId="EBI-2623095">
        <id>Q9Y371</id>
    </interactant>
    <interactant intactId="EBI-358539">
        <id>Q9HAV0</id>
        <label>GNB4</label>
    </interactant>
    <organismsDiffer>false</organismsDiffer>
    <experiments>3</experiments>
</comment>
<comment type="interaction">
    <interactant intactId="EBI-2623095">
        <id>Q9Y371</id>
    </interactant>
    <interactant intactId="EBI-715539">
        <id>P32780</id>
        <label>GTF2H1</label>
    </interactant>
    <organismsDiffer>false</organismsDiffer>
    <experiments>3</experiments>
</comment>
<comment type="interaction">
    <interactant intactId="EBI-2623095">
        <id>Q9Y371</id>
    </interactant>
    <interactant intactId="EBI-6447217">
        <id>O75409</id>
        <label>H2AP</label>
    </interactant>
    <organismsDiffer>false</organismsDiffer>
    <experiments>3</experiments>
</comment>
<comment type="interaction">
    <interactant intactId="EBI-2623095">
        <id>Q9Y371</id>
    </interactant>
    <interactant intactId="EBI-2868501">
        <id>Q6NXT2</id>
        <label>H3-5</label>
    </interactant>
    <organismsDiffer>false</organismsDiffer>
    <experiments>3</experiments>
</comment>
<comment type="interaction">
    <interactant intactId="EBI-2623095">
        <id>Q9Y371</id>
    </interactant>
    <interactant intactId="EBI-79722">
        <id>P68431</id>
        <label>H3C12</label>
    </interactant>
    <organismsDiffer>false</organismsDiffer>
    <experiments>3</experiments>
</comment>
<comment type="interaction">
    <interactant intactId="EBI-2623095">
        <id>Q9Y371</id>
    </interactant>
    <interactant intactId="EBI-10763431">
        <id>P53701</id>
        <label>HCCS</label>
    </interactant>
    <organismsDiffer>false</organismsDiffer>
    <experiments>3</experiments>
</comment>
<comment type="interaction">
    <interactant intactId="EBI-2623095">
        <id>Q9Y371</id>
    </interactant>
    <interactant intactId="EBI-12937691">
        <id>Q9BUP3-3</id>
        <label>HTATIP2</label>
    </interactant>
    <organismsDiffer>false</organismsDiffer>
    <experiments>3</experiments>
</comment>
<comment type="interaction">
    <interactant intactId="EBI-2623095">
        <id>Q9Y371</id>
    </interactant>
    <interactant intactId="EBI-9090173">
        <id>P0C870</id>
        <label>JMJD7</label>
    </interactant>
    <organismsDiffer>false</organismsDiffer>
    <experiments>3</experiments>
</comment>
<comment type="interaction">
    <interactant intactId="EBI-2623095">
        <id>Q9Y371</id>
    </interactant>
    <interactant intactId="EBI-720411">
        <id>Q9UK76</id>
        <label>JPT1</label>
    </interactant>
    <organismsDiffer>false</organismsDiffer>
    <experiments>3</experiments>
</comment>
<comment type="interaction">
    <interactant intactId="EBI-2623095">
        <id>Q9Y371</id>
    </interactant>
    <interactant intactId="EBI-743960">
        <id>Q8N5Z5</id>
        <label>KCTD17</label>
    </interactant>
    <organismsDiffer>false</organismsDiffer>
    <experiments>3</experiments>
</comment>
<comment type="interaction">
    <interactant intactId="EBI-2623095">
        <id>Q9Y371</id>
    </interactant>
    <interactant intactId="EBI-9088829">
        <id>Q6DKI2</id>
        <label>LGALS9C</label>
    </interactant>
    <organismsDiffer>false</organismsDiffer>
    <experiments>3</experiments>
</comment>
<comment type="interaction">
    <interactant intactId="EBI-2623095">
        <id>Q9Y371</id>
    </interactant>
    <interactant intactId="EBI-25872860">
        <id>Q5VYH9</id>
        <label>LY9</label>
    </interactant>
    <organismsDiffer>false</organismsDiffer>
    <experiments>3</experiments>
</comment>
<comment type="interaction">
    <interactant intactId="EBI-2623095">
        <id>Q9Y371</id>
    </interactant>
    <interactant intactId="EBI-10182930">
        <id>P43361</id>
        <label>MAGEA8</label>
    </interactant>
    <organismsDiffer>false</organismsDiffer>
    <experiments>3</experiments>
</comment>
<comment type="interaction">
    <interactant intactId="EBI-2623095">
        <id>Q9Y371</id>
    </interactant>
    <interactant intactId="EBI-741835">
        <id>Q96M61</id>
        <label>MAGEB18</label>
    </interactant>
    <organismsDiffer>false</organismsDiffer>
    <experiments>3</experiments>
</comment>
<comment type="interaction">
    <interactant intactId="EBI-2623095">
        <id>Q9Y371</id>
    </interactant>
    <interactant intactId="EBI-944295">
        <id>Q969L2</id>
        <label>MAL2</label>
    </interactant>
    <organismsDiffer>false</organismsDiffer>
    <experiments>6</experiments>
</comment>
<comment type="interaction">
    <interactant intactId="EBI-2623095">
        <id>Q9Y371</id>
    </interactant>
    <interactant intactId="EBI-3911344">
        <id>P27338</id>
        <label>MAOB</label>
    </interactant>
    <organismsDiffer>false</organismsDiffer>
    <experiments>3</experiments>
</comment>
<comment type="interaction">
    <interactant intactId="EBI-2623095">
        <id>Q9Y371</id>
    </interactant>
    <interactant intactId="EBI-2689785">
        <id>Q8NI22</id>
        <label>MCFD2</label>
    </interactant>
    <organismsDiffer>false</organismsDiffer>
    <experiments>3</experiments>
</comment>
<comment type="interaction">
    <interactant intactId="EBI-2623095">
        <id>Q9Y371</id>
    </interactant>
    <interactant intactId="EBI-11988931">
        <id>Q96C03-3</id>
        <label>MIEF2</label>
    </interactant>
    <organismsDiffer>false</organismsDiffer>
    <experiments>3</experiments>
</comment>
<comment type="interaction">
    <interactant intactId="EBI-2623095">
        <id>Q9Y371</id>
    </interactant>
    <interactant intactId="EBI-747381">
        <id>Q9BV20</id>
        <label>MRI1</label>
    </interactant>
    <organismsDiffer>false</organismsDiffer>
    <experiments>3</experiments>
</comment>
<comment type="interaction">
    <interactant intactId="EBI-2623095">
        <id>Q9Y371</id>
    </interactant>
    <interactant intactId="EBI-17937277">
        <id>Q8N387</id>
        <label>MUC15</label>
    </interactant>
    <organismsDiffer>false</organismsDiffer>
    <experiments>3</experiments>
</comment>
<comment type="interaction">
    <interactant intactId="EBI-2623095">
        <id>Q9Y371</id>
    </interactant>
    <interactant intactId="EBI-447544">
        <id>P01106</id>
        <label>MYC</label>
    </interactant>
    <organismsDiffer>false</organismsDiffer>
    <experiments>3</experiments>
</comment>
<comment type="interaction">
    <interactant intactId="EBI-2623095">
        <id>Q9Y371</id>
    </interactant>
    <interactant intactId="EBI-12260336">
        <id>Q9H7X0</id>
        <label>NAA60</label>
    </interactant>
    <organismsDiffer>false</organismsDiffer>
    <experiments>3</experiments>
</comment>
<comment type="interaction">
    <interactant intactId="EBI-2623095">
        <id>Q9Y371</id>
    </interactant>
    <interactant intactId="EBI-11526455">
        <id>Q9UJ70-2</id>
        <label>NAGK</label>
    </interactant>
    <organismsDiffer>false</organismsDiffer>
    <experiments>3</experiments>
</comment>
<comment type="interaction">
    <interactant intactId="EBI-2623095">
        <id>Q9Y371</id>
    </interactant>
    <interactant intactId="EBI-10986258">
        <id>Q69YL0</id>
        <label>NCBP2AS2</label>
    </interactant>
    <organismsDiffer>false</organismsDiffer>
    <experiments>3</experiments>
</comment>
<comment type="interaction">
    <interactant intactId="EBI-2623095">
        <id>Q9Y371</id>
    </interactant>
    <interactant intactId="EBI-389728">
        <id>P25208</id>
        <label>NFYB</label>
    </interactant>
    <organismsDiffer>false</organismsDiffer>
    <experiments>3</experiments>
</comment>
<comment type="interaction">
    <interactant intactId="EBI-2623095">
        <id>Q9Y371</id>
    </interactant>
    <interactant intactId="EBI-25840002">
        <id>O15130-2</id>
        <label>NPFF</label>
    </interactant>
    <organismsDiffer>false</organismsDiffer>
    <experiments>3</experiments>
</comment>
<comment type="interaction">
    <interactant intactId="EBI-2623095">
        <id>Q9Y371</id>
    </interactant>
    <interactant intactId="EBI-12080840">
        <id>P27815-4</id>
        <label>PDE4A</label>
    </interactant>
    <organismsDiffer>false</organismsDiffer>
    <experiments>3</experiments>
</comment>
<comment type="interaction">
    <interactant intactId="EBI-2623095">
        <id>Q9Y371</id>
    </interactant>
    <interactant intactId="EBI-11337896">
        <id>A5PLL7</id>
        <label>PEDS1</label>
    </interactant>
    <organismsDiffer>false</organismsDiffer>
    <experiments>3</experiments>
</comment>
<comment type="interaction">
    <interactant intactId="EBI-2623095">
        <id>Q9Y371</id>
    </interactant>
    <interactant intactId="EBI-1042490">
        <id>Q00169</id>
        <label>PITPNA</label>
    </interactant>
    <organismsDiffer>false</organismsDiffer>
    <experiments>3</experiments>
</comment>
<comment type="interaction">
    <interactant intactId="EBI-2623095">
        <id>Q9Y371</id>
    </interactant>
    <interactant intactId="EBI-1047143">
        <id>P48739</id>
        <label>PITPNB</label>
    </interactant>
    <organismsDiffer>false</organismsDiffer>
    <experiments>3</experiments>
</comment>
<comment type="interaction">
    <interactant intactId="EBI-2623095">
        <id>Q9Y371</id>
    </interactant>
    <interactant intactId="EBI-725795">
        <id>O60664</id>
        <label>PLIN3</label>
    </interactant>
    <organismsDiffer>false</organismsDiffer>
    <experiments>3</experiments>
</comment>
<comment type="interaction">
    <interactant intactId="EBI-2623095">
        <id>Q9Y371</id>
    </interactant>
    <interactant intactId="EBI-712752">
        <id>Q14181</id>
        <label>POLA2</label>
    </interactant>
    <organismsDiffer>false</organismsDiffer>
    <experiments>3</experiments>
</comment>
<comment type="interaction">
    <interactant intactId="EBI-2623095">
        <id>Q9Y371</id>
    </interactant>
    <interactant intactId="EBI-718973">
        <id>P02775</id>
        <label>PPBP</label>
    </interactant>
    <organismsDiffer>false</organismsDiffer>
    <experiments>3</experiments>
</comment>
<comment type="interaction">
    <interactant intactId="EBI-2623095">
        <id>Q9Y371</id>
    </interactant>
    <interactant intactId="EBI-25835994">
        <id>Q6ZMI0-5</id>
        <label>PPP1R21</label>
    </interactant>
    <organismsDiffer>false</organismsDiffer>
    <experiments>3</experiments>
</comment>
<comment type="interaction">
    <interactant intactId="EBI-2623095">
        <id>Q9Y371</id>
    </interactant>
    <interactant intactId="EBI-25836834">
        <id>P23942</id>
        <label>PRPH2</label>
    </interactant>
    <organismsDiffer>false</organismsDiffer>
    <experiments>3</experiments>
</comment>
<comment type="interaction">
    <interactant intactId="EBI-2623095">
        <id>Q9Y371</id>
    </interactant>
    <interactant intactId="EBI-359352">
        <id>P25786</id>
        <label>PSMA1</label>
    </interactant>
    <organismsDiffer>false</organismsDiffer>
    <experiments>3</experiments>
</comment>
<comment type="interaction">
    <interactant intactId="EBI-2623095">
        <id>Q9Y371</id>
    </interactant>
    <interactant intactId="EBI-948821">
        <id>P41222</id>
        <label>PTGDS</label>
    </interactant>
    <organismsDiffer>false</organismsDiffer>
    <experiments>3</experiments>
</comment>
<comment type="interaction">
    <interactant intactId="EBI-2623095">
        <id>Q9Y371</id>
    </interactant>
    <interactant intactId="EBI-712367">
        <id>Q9UI14</id>
        <label>RABAC1</label>
    </interactant>
    <organismsDiffer>false</organismsDiffer>
    <experiments>3</experiments>
</comment>
<comment type="interaction">
    <interactant intactId="EBI-2623095">
        <id>Q9Y371</id>
    </interactant>
    <interactant intactId="EBI-620823">
        <id>Q09028</id>
        <label>RBBP4</label>
    </interactant>
    <organismsDiffer>false</organismsDiffer>
    <experiments>3</experiments>
</comment>
<comment type="interaction">
    <interactant intactId="EBI-2623095">
        <id>Q9Y371</id>
    </interactant>
    <interactant intactId="EBI-14065960">
        <id>Q96HR9-2</id>
        <label>REEP6</label>
    </interactant>
    <organismsDiffer>false</organismsDiffer>
    <experiments>3</experiments>
</comment>
<comment type="interaction">
    <interactant intactId="EBI-2623095">
        <id>Q9Y371</id>
    </interactant>
    <interactant intactId="EBI-18304046">
        <id>Q6ZWK4</id>
        <label>RHEX</label>
    </interactant>
    <organismsDiffer>false</organismsDiffer>
    <experiments>3</experiments>
</comment>
<comment type="interaction">
    <interactant intactId="EBI-2623095">
        <id>Q9Y371</id>
    </interactant>
    <interactant intactId="EBI-9091816">
        <id>Q9NPQ8-4</id>
        <label>RIC8A</label>
    </interactant>
    <organismsDiffer>false</organismsDiffer>
    <experiments>8</experiments>
</comment>
<comment type="interaction">
    <interactant intactId="EBI-2623095">
        <id>Q9Y371</id>
    </interactant>
    <interactant intactId="EBI-354303">
        <id>P62701</id>
        <label>RPS4X</label>
    </interactant>
    <organismsDiffer>false</organismsDiffer>
    <experiments>3</experiments>
</comment>
<comment type="interaction">
    <interactant intactId="EBI-2623095">
        <id>Q9Y371</id>
    </interactant>
    <interactant intactId="EBI-954338">
        <id>O15126</id>
        <label>SCAMP1</label>
    </interactant>
    <organismsDiffer>false</organismsDiffer>
    <experiments>3</experiments>
</comment>
<comment type="interaction">
    <interactant intactId="EBI-2623095">
        <id>Q9Y371</id>
    </interactant>
    <interactant intactId="EBI-1389808">
        <id>Q9BRK5</id>
        <label>SDF4</label>
    </interactant>
    <organismsDiffer>false</organismsDiffer>
    <experiments>3</experiments>
</comment>
<comment type="interaction">
    <interactant intactId="EBI-2623095">
        <id>Q9Y371</id>
    </interactant>
    <interactant intactId="EBI-296557">
        <id>P01011</id>
        <label>SERPINA3</label>
    </interactant>
    <organismsDiffer>false</organismsDiffer>
    <experiments>3</experiments>
</comment>
<comment type="interaction">
    <interactant intactId="EBI-2623095">
        <id>Q9Y371</id>
    </interactant>
    <interactant intactId="EBI-1171999">
        <id>Q9BWM7</id>
        <label>SFXN3</label>
    </interactant>
    <organismsDiffer>false</organismsDiffer>
    <experiments>3</experiments>
</comment>
<comment type="interaction">
    <interactant intactId="EBI-2623095">
        <id>Q9Y371</id>
    </interactant>
    <interactant intactId="EBI-747389">
        <id>Q7L8J4</id>
        <label>SH3BP5L</label>
    </interactant>
    <organismsDiffer>false</organismsDiffer>
    <experiments>3</experiments>
</comment>
<comment type="interaction">
    <interactant intactId="EBI-2623095">
        <id>Q9Y371</id>
    </interactant>
    <interactant intactId="EBI-2623095">
        <id>Q9Y371</id>
        <label>SH3GLB1</label>
    </interactant>
    <organismsDiffer>false</organismsDiffer>
    <experiments>8</experiments>
</comment>
<comment type="interaction">
    <interactant intactId="EBI-2623095">
        <id>Q9Y371</id>
    </interactant>
    <interactant intactId="EBI-749607">
        <id>Q9NR46</id>
        <label>SH3GLB2</label>
    </interactant>
    <organismsDiffer>false</organismsDiffer>
    <experiments>23</experiments>
</comment>
<comment type="interaction">
    <interactant intactId="EBI-2623095">
        <id>Q9Y371</id>
    </interactant>
    <interactant intactId="EBI-10818532">
        <id>Q9BZQ2</id>
        <label>SHCBP1L</label>
    </interactant>
    <organismsDiffer>false</organismsDiffer>
    <experiments>3</experiments>
</comment>
<comment type="interaction">
    <interactant intactId="EBI-2623095">
        <id>Q9Y371</id>
    </interactant>
    <interactant intactId="EBI-13384308">
        <id>H3BQL7</id>
        <label>SIN3A</label>
    </interactant>
    <organismsDiffer>false</organismsDiffer>
    <experiments>3</experiments>
</comment>
<comment type="interaction">
    <interactant intactId="EBI-2623095">
        <id>Q9Y371</id>
    </interactant>
    <interactant intactId="EBI-2874543">
        <id>Q96EX1</id>
        <label>SMIM12</label>
    </interactant>
    <organismsDiffer>false</organismsDiffer>
    <experiments>3</experiments>
</comment>
<comment type="interaction">
    <interactant intactId="EBI-2623095">
        <id>Q9Y371</id>
    </interactant>
    <interactant intactId="EBI-12334905">
        <id>Q71RC9</id>
        <label>SMIM5</label>
    </interactant>
    <organismsDiffer>false</organismsDiffer>
    <experiments>3</experiments>
</comment>
<comment type="interaction">
    <interactant intactId="EBI-2623095">
        <id>Q9Y371</id>
    </interactant>
    <interactant intactId="EBI-12828299">
        <id>O60906</id>
        <label>SMPD2</label>
    </interactant>
    <organismsDiffer>false</organismsDiffer>
    <experiments>3</experiments>
</comment>
<comment type="interaction">
    <interactant intactId="EBI-2623095">
        <id>Q9Y371</id>
    </interactant>
    <interactant intactId="EBI-632715">
        <id>Q13573</id>
        <label>SNW1</label>
    </interactant>
    <organismsDiffer>false</organismsDiffer>
    <experiments>3</experiments>
</comment>
<comment type="interaction">
    <interactant intactId="EBI-2623095">
        <id>Q9Y371</id>
    </interactant>
    <interactant intactId="EBI-2822329">
        <id>Q13596</id>
        <label>SNX1</label>
    </interactant>
    <organismsDiffer>false</organismsDiffer>
    <experiments>3</experiments>
</comment>
<comment type="interaction">
    <interactant intactId="EBI-2623095">
        <id>Q9Y371</id>
    </interactant>
    <interactant intactId="EBI-724909">
        <id>O95219</id>
        <label>SNX4</label>
    </interactant>
    <organismsDiffer>false</organismsDiffer>
    <experiments>3</experiments>
</comment>
<comment type="interaction">
    <interactant intactId="EBI-2623095">
        <id>Q9Y371</id>
    </interactant>
    <interactant intactId="EBI-2643803">
        <id>Q8N0X7</id>
        <label>SPART</label>
    </interactant>
    <organismsDiffer>false</organismsDiffer>
    <experiments>3</experiments>
</comment>
<comment type="interaction">
    <interactant intactId="EBI-2623095">
        <id>Q9Y371</id>
    </interactant>
    <interactant intactId="EBI-12512419">
        <id>Q9NYA1-2</id>
        <label>SPHK1</label>
    </interactant>
    <organismsDiffer>false</organismsDiffer>
    <experiments>3</experiments>
</comment>
<comment type="interaction">
    <interactant intactId="EBI-2623095">
        <id>Q9Y371</id>
    </interactant>
    <interactant intactId="EBI-21726245">
        <id>Q9BPZ2</id>
        <label>SPIN2B</label>
    </interactant>
    <organismsDiffer>false</organismsDiffer>
    <experiments>3</experiments>
</comment>
<comment type="interaction">
    <interactant intactId="EBI-2623095">
        <id>Q9Y371</id>
    </interactant>
    <interactant intactId="EBI-17962797">
        <id>Q9BXA5</id>
        <label>SUCNR1</label>
    </interactant>
    <organismsDiffer>false</organismsDiffer>
    <experiments>3</experiments>
</comment>
<comment type="interaction">
    <interactant intactId="EBI-2623095">
        <id>Q9Y371</id>
    </interactant>
    <interactant intactId="EBI-11123832">
        <id>O60506-4</id>
        <label>SYNCRIP</label>
    </interactant>
    <organismsDiffer>false</organismsDiffer>
    <experiments>3</experiments>
</comment>
<comment type="interaction">
    <interactant intactId="EBI-2623095">
        <id>Q9Y371</id>
    </interactant>
    <interactant intactId="EBI-11321949">
        <id>O43761</id>
        <label>SYNGR3</label>
    </interactant>
    <organismsDiffer>false</organismsDiffer>
    <experiments>6</experiments>
</comment>
<comment type="interaction">
    <interactant intactId="EBI-2623095">
        <id>Q9Y371</id>
    </interactant>
    <interactant intactId="EBI-9071725">
        <id>P08247</id>
        <label>SYP</label>
    </interactant>
    <organismsDiffer>false</organismsDiffer>
    <experiments>6</experiments>
</comment>
<comment type="interaction">
    <interactant intactId="EBI-2623095">
        <id>Q9Y371</id>
    </interactant>
    <interactant intactId="EBI-10238936">
        <id>Q17RD7</id>
        <label>SYT16</label>
    </interactant>
    <organismsDiffer>false</organismsDiffer>
    <experiments>3</experiments>
</comment>
<comment type="interaction">
    <interactant intactId="EBI-2623095">
        <id>Q9Y371</id>
    </interactant>
    <interactant intactId="EBI-711018">
        <id>P54274-2</id>
        <label>TERF1</label>
    </interactant>
    <organismsDiffer>false</organismsDiffer>
    <experiments>3</experiments>
</comment>
<comment type="interaction">
    <interactant intactId="EBI-2623095">
        <id>Q9Y371</id>
    </interactant>
    <interactant intactId="EBI-1105213">
        <id>Q9UBB9</id>
        <label>TFIP11</label>
    </interactant>
    <organismsDiffer>false</organismsDiffer>
    <experiments>7</experiments>
</comment>
<comment type="interaction">
    <interactant intactId="EBI-2623095">
        <id>Q9Y371</id>
    </interactant>
    <interactant intactId="EBI-2562368">
        <id>P22735</id>
        <label>TGM1</label>
    </interactant>
    <organismsDiffer>false</organismsDiffer>
    <experiments>3</experiments>
</comment>
<comment type="interaction">
    <interactant intactId="EBI-2623095">
        <id>Q9Y371</id>
    </interactant>
    <interactant intactId="EBI-3920747">
        <id>Q9NQ88</id>
        <label>TIGAR</label>
    </interactant>
    <organismsDiffer>false</organismsDiffer>
    <experiments>3</experiments>
</comment>
<comment type="interaction">
    <interactant intactId="EBI-2623095">
        <id>Q9Y371</id>
    </interactant>
    <interactant intactId="EBI-1047996">
        <id>O14925</id>
        <label>TIMM23</label>
    </interactant>
    <organismsDiffer>false</organismsDiffer>
    <experiments>3</experiments>
</comment>
<comment type="interaction">
    <interactant intactId="EBI-2623095">
        <id>Q9Y371</id>
    </interactant>
    <interactant intactId="EBI-8633987">
        <id>Q12893</id>
        <label>TMEM115</label>
    </interactant>
    <organismsDiffer>false</organismsDiffer>
    <experiments>3</experiments>
</comment>
<comment type="interaction">
    <interactant intactId="EBI-2623095">
        <id>Q9Y371</id>
    </interactant>
    <interactant intactId="EBI-25874374">
        <id>Q8WVE6-2</id>
        <label>TMEM171</label>
    </interactant>
    <organismsDiffer>false</organismsDiffer>
    <experiments>3</experiments>
</comment>
<comment type="interaction">
    <interactant intactId="EBI-2623095">
        <id>Q9Y371</id>
    </interactant>
    <interactant intactId="EBI-10242677">
        <id>Q53NU3</id>
        <label>tmp_locus_54</label>
    </interactant>
    <organismsDiffer>false</organismsDiffer>
    <experiments>3</experiments>
</comment>
<comment type="interaction">
    <interactant intactId="EBI-2623095">
        <id>Q9Y371</id>
    </interactant>
    <interactant intactId="EBI-1047508">
        <id>Q9NS69</id>
        <label>TOMM22</label>
    </interactant>
    <organismsDiffer>false</organismsDiffer>
    <experiments>3</experiments>
</comment>
<comment type="interaction">
    <interactant intactId="EBI-2623095">
        <id>Q9Y371</id>
    </interactant>
    <interactant intactId="EBI-12124194">
        <id>P55327-2</id>
        <label>TPD52</label>
    </interactant>
    <organismsDiffer>false</organismsDiffer>
    <experiments>3</experiments>
</comment>
<comment type="interaction">
    <interactant intactId="EBI-2623095">
        <id>Q9Y371</id>
    </interactant>
    <interactant intactId="EBI-782604">
        <id>O43399</id>
        <label>TPD52L2</label>
    </interactant>
    <organismsDiffer>false</organismsDiffer>
    <experiments>3</experiments>
</comment>
<comment type="interaction">
    <interactant intactId="EBI-2623095">
        <id>Q9Y371</id>
    </interactant>
    <interactant intactId="EBI-10327230">
        <id>Q6FGS1</id>
        <label>TPD52L2</label>
    </interactant>
    <organismsDiffer>false</organismsDiffer>
    <experiments>3</experiments>
</comment>
<comment type="interaction">
    <interactant intactId="EBI-2623095">
        <id>Q9Y371</id>
    </interactant>
    <interactant intactId="EBI-12840050">
        <id>Q9C035-3</id>
        <label>TRIM5</label>
    </interactant>
    <organismsDiffer>false</organismsDiffer>
    <experiments>3</experiments>
</comment>
<comment type="interaction">
    <interactant intactId="EBI-2623095">
        <id>Q9Y371</id>
    </interactant>
    <interactant intactId="EBI-11525489">
        <id>Q86WT6-2</id>
        <label>TRIM69</label>
    </interactant>
    <organismsDiffer>false</organismsDiffer>
    <experiments>3</experiments>
</comment>
<comment type="interaction">
    <interactant intactId="EBI-2623095">
        <id>Q9Y371</id>
    </interactant>
    <interactant intactId="EBI-10210710">
        <id>P49638</id>
        <label>TTPA</label>
    </interactant>
    <organismsDiffer>false</organismsDiffer>
    <experiments>3</experiments>
</comment>
<comment type="interaction">
    <interactant intactId="EBI-2623095">
        <id>Q9Y371</id>
    </interactant>
    <interactant intactId="EBI-17671298">
        <id>Q9H313-4</id>
        <label>TTYH1</label>
    </interactant>
    <organismsDiffer>false</organismsDiffer>
    <experiments>3</experiments>
</comment>
<comment type="interaction">
    <interactant intactId="EBI-2623095">
        <id>Q9Y371</id>
    </interactant>
    <interactant intactId="EBI-1103245">
        <id>Q9BQE3</id>
        <label>TUBA1C</label>
    </interactant>
    <organismsDiffer>false</organismsDiffer>
    <experiments>3</experiments>
</comment>
<comment type="interaction">
    <interactant intactId="EBI-2623095">
        <id>Q9Y371</id>
    </interactant>
    <interactant intactId="EBI-2340619">
        <id>P62253</id>
        <label>UBE2G1</label>
    </interactant>
    <organismsDiffer>false</organismsDiffer>
    <experiments>3</experiments>
</comment>
<comment type="interaction">
    <interactant intactId="EBI-2623095">
        <id>Q9Y371</id>
    </interactant>
    <interactant intactId="EBI-2952704">
        <id>Q9P2Y5</id>
        <label>UVRAG</label>
    </interactant>
    <organismsDiffer>false</organismsDiffer>
    <experiments>11</experiments>
</comment>
<comment type="interaction">
    <interactant intactId="EBI-2623095">
        <id>Q9Y371</id>
    </interactant>
    <interactant intactId="EBI-2799703">
        <id>O95070</id>
        <label>YIF1A</label>
    </interactant>
    <organismsDiffer>false</organismsDiffer>
    <experiments>3</experiments>
</comment>
<comment type="interaction">
    <interactant intactId="EBI-2623095">
        <id>Q9Y371</id>
    </interactant>
    <interactant intactId="EBI-10176632">
        <id>O43829</id>
        <label>ZBTB14</label>
    </interactant>
    <organismsDiffer>false</organismsDiffer>
    <experiments>3</experiments>
</comment>
<comment type="interaction">
    <interactant intactId="EBI-2623095">
        <id>Q9Y371</id>
    </interactant>
    <interactant intactId="EBI-14104088">
        <id>Q53FD0-2</id>
        <label>ZC2HC1C</label>
    </interactant>
    <organismsDiffer>false</organismsDiffer>
    <experiments>3</experiments>
</comment>
<comment type="interaction">
    <interactant intactId="EBI-2623095">
        <id>Q9Y371</id>
    </interactant>
    <interactant intactId="EBI-3921014">
        <id>Q9H609</id>
        <label>ZNF576</label>
    </interactant>
    <organismsDiffer>false</organismsDiffer>
    <experiments>6</experiments>
</comment>
<comment type="interaction">
    <interactant intactId="EBI-2623095">
        <id>Q9Y371</id>
    </interactant>
    <interactant intactId="EBI-18036029">
        <id>Q3KNS6-3</id>
        <label>ZNF829</label>
    </interactant>
    <organismsDiffer>false</organismsDiffer>
    <experiments>3</experiments>
</comment>
<comment type="interaction">
    <interactant intactId="EBI-5291808">
        <id>Q9Y371-1</id>
    </interactant>
    <interactant intactId="EBI-516580">
        <id>Q07812</id>
        <label>BAX</label>
    </interactant>
    <organismsDiffer>false</organismsDiffer>
    <experiments>2</experiments>
</comment>
<comment type="interaction">
    <interactant intactId="EBI-5282812">
        <id>Q9Y371-2</id>
    </interactant>
    <interactant intactId="EBI-5282812">
        <id>Q9Y371-2</id>
        <label>SH3GLB1</label>
    </interactant>
    <organismsDiffer>false</organismsDiffer>
    <experiments>3</experiments>
</comment>
<comment type="subcellular location">
    <subcellularLocation>
        <location evidence="9">Cytoplasm</location>
    </subcellularLocation>
    <subcellularLocation>
        <location evidence="12">Golgi apparatus membrane</location>
        <topology evidence="1">Peripheral membrane protein</topology>
    </subcellularLocation>
    <subcellularLocation>
        <location evidence="9">Mitochondrion outer membrane</location>
        <topology evidence="9">Peripheral membrane protein</topology>
    </subcellularLocation>
    <subcellularLocation>
        <location evidence="10">Cytoplasmic vesicle</location>
        <location evidence="10">Autophagosome membrane</location>
    </subcellularLocation>
    <subcellularLocation>
        <location evidence="11">Midbody</location>
    </subcellularLocation>
    <text evidence="1 10">Association with the Golgi apparatus depends on the cell type (By similarity). Following starvation colocalizes with ATG5 and LC3 autophagy-related protein(s)on autophagosomal membranes (PubMed:17891140).</text>
</comment>
<comment type="alternative products">
    <event type="alternative splicing"/>
    <isoform>
        <id>Q9Y371-1</id>
        <name>1</name>
        <sequence type="displayed"/>
    </isoform>
    <isoform>
        <id>Q9Y371-2</id>
        <name>2</name>
        <sequence type="described" ref="VSP_009276"/>
    </isoform>
    <isoform>
        <id>Q9Y371-3</id>
        <name>3</name>
        <sequence type="described" ref="VSP_044895"/>
    </isoform>
    <text>Additional isoforms seem to exist.</text>
</comment>
<comment type="tissue specificity">
    <text evidence="6 7">Highly expressed in heart, skeletal muscle, kidney and placenta. Detected at lower levels in brain, colon, thymus, spleen, liver, small intestine, lung and peripheral blood leukocytes.</text>
</comment>
<comment type="domain">
    <text evidence="8">An N-terminal amphipathic helix, the BAR domain and a second amphipathic helix inserted into helix 1 of the BAR domain (N-BAR domain) induce membrane curvature and bind curved membranes.</text>
</comment>
<comment type="domain">
    <text evidence="10">The SH3 domain is required and sufficient for the interaction with UVRAG.</text>
</comment>
<comment type="PTM">
    <text evidence="13">Phosphorylated at Thr-145 by CDK5; this phosphorylation is required for autophagy induction in starved neurons and facilitates homodimerization.</text>
</comment>
<comment type="miscellaneous">
    <text>HeLa cells lacking SH3GLB1 show dissociation of outer and inner mitochondrial membrane as well as abnormal mitochondrial morphology. Cells overexpressing SH3GLB1 lacking an N-terminal amphipathic helix show a similar phenotype.</text>
</comment>
<comment type="miscellaneous">
    <text>SH3GLB1 binds liposomes and induces formation of tubules from liposomes. SH3GLB1 lacking the N-terminal amphipathic helix fails to induce liposome tubulation.</text>
</comment>
<comment type="similarity">
    <text evidence="16">Belongs to the endophilin family.</text>
</comment>
<comment type="caution">
    <text evidence="16">It is uncertain whether Met-1 or Met-4 is the initiator.</text>
</comment>
<comment type="caution">
    <text evidence="17">Was originally thought to have lysophosphatidic acid acyltransferase activity, but by homology with SH3GL2/endophilin A1 is unlikely to have this activity.</text>
</comment>
<comment type="sequence caution" evidence="16">
    <conflict type="erroneous initiation">
        <sequence resource="EMBL-CDS" id="AAF81225"/>
    </conflict>
</comment>
<comment type="sequence caution" evidence="16">
    <conflict type="erroneous initiation">
        <sequence resource="EMBL-CDS" id="BAD88797"/>
    </conflict>
</comment>
<proteinExistence type="evidence at protein level"/>
<accession>Q9Y371</accession>
<accession>B4E182</accession>
<accession>Q5H8U5</accession>
<accession>Q9H3Z0</accession>
<accession>Q9NR47</accession>
<accession>Q9NYA9</accession>
<organism>
    <name type="scientific">Homo sapiens</name>
    <name type="common">Human</name>
    <dbReference type="NCBI Taxonomy" id="9606"/>
    <lineage>
        <taxon>Eukaryota</taxon>
        <taxon>Metazoa</taxon>
        <taxon>Chordata</taxon>
        <taxon>Craniata</taxon>
        <taxon>Vertebrata</taxon>
        <taxon>Euteleostomi</taxon>
        <taxon>Mammalia</taxon>
        <taxon>Eutheria</taxon>
        <taxon>Euarchontoglires</taxon>
        <taxon>Primates</taxon>
        <taxon>Haplorrhini</taxon>
        <taxon>Catarrhini</taxon>
        <taxon>Hominidae</taxon>
        <taxon>Homo</taxon>
    </lineage>
</organism>
<name>SHLB1_HUMAN</name>
<evidence type="ECO:0000250" key="1"/>
<evidence type="ECO:0000250" key="2">
    <source>
        <dbReference type="UniProtKB" id="Q9JK48"/>
    </source>
</evidence>
<evidence type="ECO:0000255" key="3"/>
<evidence type="ECO:0000255" key="4">
    <source>
        <dbReference type="PROSITE-ProRule" id="PRU00192"/>
    </source>
</evidence>
<evidence type="ECO:0000255" key="5">
    <source>
        <dbReference type="PROSITE-ProRule" id="PRU00361"/>
    </source>
</evidence>
<evidence type="ECO:0000269" key="6">
    <source>
    </source>
</evidence>
<evidence type="ECO:0000269" key="7">
    <source>
    </source>
</evidence>
<evidence type="ECO:0000269" key="8">
    <source>
    </source>
</evidence>
<evidence type="ECO:0000269" key="9">
    <source>
    </source>
</evidence>
<evidence type="ECO:0000269" key="10">
    <source>
    </source>
</evidence>
<evidence type="ECO:0000269" key="11">
    <source>
    </source>
</evidence>
<evidence type="ECO:0000269" key="12">
    <source>
    </source>
</evidence>
<evidence type="ECO:0000269" key="13">
    <source>
    </source>
</evidence>
<evidence type="ECO:0000303" key="14">
    <source>
    </source>
</evidence>
<evidence type="ECO:0000303" key="15">
    <source>
    </source>
</evidence>
<evidence type="ECO:0000305" key="16"/>
<evidence type="ECO:0000305" key="17">
    <source>
    </source>
</evidence>
<evidence type="ECO:0007744" key="18">
    <source>
    </source>
</evidence>
<evidence type="ECO:0007829" key="19">
    <source>
        <dbReference type="PDB" id="9G2U"/>
    </source>
</evidence>
<keyword id="KW-0002">3D-structure</keyword>
<keyword id="KW-0007">Acetylation</keyword>
<keyword id="KW-0025">Alternative splicing</keyword>
<keyword id="KW-0053">Apoptosis</keyword>
<keyword id="KW-0072">Autophagy</keyword>
<keyword id="KW-0175">Coiled coil</keyword>
<keyword id="KW-0963">Cytoplasm</keyword>
<keyword id="KW-0968">Cytoplasmic vesicle</keyword>
<keyword id="KW-0333">Golgi apparatus</keyword>
<keyword id="KW-0446">Lipid-binding</keyword>
<keyword id="KW-0472">Membrane</keyword>
<keyword id="KW-0496">Mitochondrion</keyword>
<keyword id="KW-1000">Mitochondrion outer membrane</keyword>
<keyword id="KW-0597">Phosphoprotein</keyword>
<keyword id="KW-1267">Proteomics identification</keyword>
<keyword id="KW-1185">Reference proteome</keyword>
<keyword id="KW-0728">SH3 domain</keyword>
<sequence length="365" mass="40796">MNIMDFNVKKLAADAGTFLSRAVQFTEEKLGQAEKTELDAHLENLLSKAECTKIWTEKIMKQTEVLLQPNPNARIEEFVYEKLDRKAPSRINNPELLGQYMIDAGTEFGPGTAYGNALIKCGETQKRIGTADRELIQTSALNFLTPLRNFIEGDYKTIAKERKLLQNKRLDLDAAKTRLKKAKAAETRNSSEQELRITQSEFDRQAEITRLLLEGISSTHAHHLRCLNDFVEAQMTYYAQCYQYMLDLQKQLGSFPSNYLSNNNQTSVTPVPSVLPNAIGSSAMASTSGLVITSPSNLSDLKECSGSRKARVLYDYDAANSTELSLLADEVITVFSVVGMDSDWLMGERGNQKGKVPITYLELLN</sequence>